<gene>
    <name evidence="25" type="primary">PSMA1</name>
    <name type="synonym">HC2</name>
    <name type="synonym">NU</name>
    <name type="synonym">PROS30</name>
    <name type="synonym">PSC2</name>
</gene>
<keyword id="KW-0002">3D-structure</keyword>
<keyword id="KW-0007">Acetylation</keyword>
<keyword id="KW-0025">Alternative splicing</keyword>
<keyword id="KW-0963">Cytoplasm</keyword>
<keyword id="KW-0903">Direct protein sequencing</keyword>
<keyword id="KW-0325">Glycoprotein</keyword>
<keyword id="KW-0391">Immunity</keyword>
<keyword id="KW-1017">Isopeptide bond</keyword>
<keyword id="KW-0539">Nucleus</keyword>
<keyword id="KW-0597">Phosphoprotein</keyword>
<keyword id="KW-0647">Proteasome</keyword>
<keyword id="KW-1267">Proteomics identification</keyword>
<keyword id="KW-1185">Reference proteome</keyword>
<keyword id="KW-0832">Ubl conjugation</keyword>
<proteinExistence type="evidence at protein level"/>
<reference key="1">
    <citation type="journal article" date="1991" name="Biochim. Biophys. Acta">
        <title>The primary structures of four subunits of the human, high-molecular-weight proteinase, macropain (proteasome), are distinct but homologous.</title>
        <authorList>
            <person name="DeMartino G.N."/>
            <person name="Orth K."/>
            <person name="McCullough M.L."/>
            <person name="Lee L.W."/>
            <person name="Munn T.Z."/>
            <person name="Moomaw C.R."/>
            <person name="Dawson P.A."/>
            <person name="Slaughter C.A."/>
        </authorList>
    </citation>
    <scope>NUCLEOTIDE SEQUENCE [MRNA] (ISOFORM SHORT)</scope>
</reference>
<reference key="2">
    <citation type="journal article" date="1991" name="Biochim. Biophys. Acta">
        <title>Molecular cloning and sequence analysis of cDNAs for five major subunits of human proteasomes (multi-catalytic proteinase complexes).</title>
        <authorList>
            <person name="Tamura T."/>
            <person name="Lee D.H."/>
            <person name="Osaka F."/>
            <person name="Fujiwara T."/>
            <person name="Shin S."/>
            <person name="Chung C.H."/>
            <person name="Tanaka K."/>
            <person name="Ichihara A."/>
        </authorList>
    </citation>
    <scope>NUCLEOTIDE SEQUENCE [MRNA] (ISOFORM SHORT)</scope>
</reference>
<reference key="3">
    <citation type="journal article" date="1992" name="Gene">
        <title>Two mRNAs exist for the Hs PROS-30 gene encoding a component of human prosomes.</title>
        <authorList>
            <person name="Silva-Pereira I."/>
            <person name="Bey F."/>
            <person name="Coux O."/>
            <person name="Scherrer K."/>
        </authorList>
    </citation>
    <scope>NUCLEOTIDE SEQUENCE [MRNA] (ISOFORM LONG)</scope>
</reference>
<reference key="4">
    <citation type="submission" date="2003-05" db="EMBL/GenBank/DDBJ databases">
        <title>Cloning of human full-length CDSs in BD Creator(TM) system donor vector.</title>
        <authorList>
            <person name="Kalnine N."/>
            <person name="Chen X."/>
            <person name="Rolfs A."/>
            <person name="Halleck A."/>
            <person name="Hines L."/>
            <person name="Eisenstein S."/>
            <person name="Koundinya M."/>
            <person name="Raphael J."/>
            <person name="Moreira D."/>
            <person name="Kelley T."/>
            <person name="LaBaer J."/>
            <person name="Lin Y."/>
            <person name="Phelan M."/>
            <person name="Farmer A."/>
        </authorList>
    </citation>
    <scope>NUCLEOTIDE SEQUENCE [LARGE SCALE MRNA]</scope>
    <scope>VARIANT VAL-37</scope>
</reference>
<reference key="5">
    <citation type="journal article" date="2004" name="Nat. Genet.">
        <title>Complete sequencing and characterization of 21,243 full-length human cDNAs.</title>
        <authorList>
            <person name="Ota T."/>
            <person name="Suzuki Y."/>
            <person name="Nishikawa T."/>
            <person name="Otsuki T."/>
            <person name="Sugiyama T."/>
            <person name="Irie R."/>
            <person name="Wakamatsu A."/>
            <person name="Hayashi K."/>
            <person name="Sato H."/>
            <person name="Nagai K."/>
            <person name="Kimura K."/>
            <person name="Makita H."/>
            <person name="Sekine M."/>
            <person name="Obayashi M."/>
            <person name="Nishi T."/>
            <person name="Shibahara T."/>
            <person name="Tanaka T."/>
            <person name="Ishii S."/>
            <person name="Yamamoto J."/>
            <person name="Saito K."/>
            <person name="Kawai Y."/>
            <person name="Isono Y."/>
            <person name="Nakamura Y."/>
            <person name="Nagahari K."/>
            <person name="Murakami K."/>
            <person name="Yasuda T."/>
            <person name="Iwayanagi T."/>
            <person name="Wagatsuma M."/>
            <person name="Shiratori A."/>
            <person name="Sudo H."/>
            <person name="Hosoiri T."/>
            <person name="Kaku Y."/>
            <person name="Kodaira H."/>
            <person name="Kondo H."/>
            <person name="Sugawara M."/>
            <person name="Takahashi M."/>
            <person name="Kanda K."/>
            <person name="Yokoi T."/>
            <person name="Furuya T."/>
            <person name="Kikkawa E."/>
            <person name="Omura Y."/>
            <person name="Abe K."/>
            <person name="Kamihara K."/>
            <person name="Katsuta N."/>
            <person name="Sato K."/>
            <person name="Tanikawa M."/>
            <person name="Yamazaki M."/>
            <person name="Ninomiya K."/>
            <person name="Ishibashi T."/>
            <person name="Yamashita H."/>
            <person name="Murakawa K."/>
            <person name="Fujimori K."/>
            <person name="Tanai H."/>
            <person name="Kimata M."/>
            <person name="Watanabe M."/>
            <person name="Hiraoka S."/>
            <person name="Chiba Y."/>
            <person name="Ishida S."/>
            <person name="Ono Y."/>
            <person name="Takiguchi S."/>
            <person name="Watanabe S."/>
            <person name="Yosida M."/>
            <person name="Hotuta T."/>
            <person name="Kusano J."/>
            <person name="Kanehori K."/>
            <person name="Takahashi-Fujii A."/>
            <person name="Hara H."/>
            <person name="Tanase T.-O."/>
            <person name="Nomura Y."/>
            <person name="Togiya S."/>
            <person name="Komai F."/>
            <person name="Hara R."/>
            <person name="Takeuchi K."/>
            <person name="Arita M."/>
            <person name="Imose N."/>
            <person name="Musashino K."/>
            <person name="Yuuki H."/>
            <person name="Oshima A."/>
            <person name="Sasaki N."/>
            <person name="Aotsuka S."/>
            <person name="Yoshikawa Y."/>
            <person name="Matsunawa H."/>
            <person name="Ichihara T."/>
            <person name="Shiohata N."/>
            <person name="Sano S."/>
            <person name="Moriya S."/>
            <person name="Momiyama H."/>
            <person name="Satoh N."/>
            <person name="Takami S."/>
            <person name="Terashima Y."/>
            <person name="Suzuki O."/>
            <person name="Nakagawa S."/>
            <person name="Senoh A."/>
            <person name="Mizoguchi H."/>
            <person name="Goto Y."/>
            <person name="Shimizu F."/>
            <person name="Wakebe H."/>
            <person name="Hishigaki H."/>
            <person name="Watanabe T."/>
            <person name="Sugiyama A."/>
            <person name="Takemoto M."/>
            <person name="Kawakami B."/>
            <person name="Yamazaki M."/>
            <person name="Watanabe K."/>
            <person name="Kumagai A."/>
            <person name="Itakura S."/>
            <person name="Fukuzumi Y."/>
            <person name="Fujimori Y."/>
            <person name="Komiyama M."/>
            <person name="Tashiro H."/>
            <person name="Tanigami A."/>
            <person name="Fujiwara T."/>
            <person name="Ono T."/>
            <person name="Yamada K."/>
            <person name="Fujii Y."/>
            <person name="Ozaki K."/>
            <person name="Hirao M."/>
            <person name="Ohmori Y."/>
            <person name="Kawabata A."/>
            <person name="Hikiji T."/>
            <person name="Kobatake N."/>
            <person name="Inagaki H."/>
            <person name="Ikema Y."/>
            <person name="Okamoto S."/>
            <person name="Okitani R."/>
            <person name="Kawakami T."/>
            <person name="Noguchi S."/>
            <person name="Itoh T."/>
            <person name="Shigeta K."/>
            <person name="Senba T."/>
            <person name="Matsumura K."/>
            <person name="Nakajima Y."/>
            <person name="Mizuno T."/>
            <person name="Morinaga M."/>
            <person name="Sasaki M."/>
            <person name="Togashi T."/>
            <person name="Oyama M."/>
            <person name="Hata H."/>
            <person name="Watanabe M."/>
            <person name="Komatsu T."/>
            <person name="Mizushima-Sugano J."/>
            <person name="Satoh T."/>
            <person name="Shirai Y."/>
            <person name="Takahashi Y."/>
            <person name="Nakagawa K."/>
            <person name="Okumura K."/>
            <person name="Nagase T."/>
            <person name="Nomura N."/>
            <person name="Kikuchi H."/>
            <person name="Masuho Y."/>
            <person name="Yamashita R."/>
            <person name="Nakai K."/>
            <person name="Yada T."/>
            <person name="Nakamura Y."/>
            <person name="Ohara O."/>
            <person name="Isogai T."/>
            <person name="Sugano S."/>
        </authorList>
    </citation>
    <scope>NUCLEOTIDE SEQUENCE [LARGE SCALE MRNA] (ISOFORM SHORT)</scope>
</reference>
<reference key="6">
    <citation type="submission" date="2005-09" db="EMBL/GenBank/DDBJ databases">
        <authorList>
            <person name="Mural R.J."/>
            <person name="Istrail S."/>
            <person name="Sutton G.G."/>
            <person name="Florea L."/>
            <person name="Halpern A.L."/>
            <person name="Mobarry C.M."/>
            <person name="Lippert R."/>
            <person name="Walenz B."/>
            <person name="Shatkay H."/>
            <person name="Dew I."/>
            <person name="Miller J.R."/>
            <person name="Flanigan M.J."/>
            <person name="Edwards N.J."/>
            <person name="Bolanos R."/>
            <person name="Fasulo D."/>
            <person name="Halldorsson B.V."/>
            <person name="Hannenhalli S."/>
            <person name="Turner R."/>
            <person name="Yooseph S."/>
            <person name="Lu F."/>
            <person name="Nusskern D.R."/>
            <person name="Shue B.C."/>
            <person name="Zheng X.H."/>
            <person name="Zhong F."/>
            <person name="Delcher A.L."/>
            <person name="Huson D.H."/>
            <person name="Kravitz S.A."/>
            <person name="Mouchard L."/>
            <person name="Reinert K."/>
            <person name="Remington K.A."/>
            <person name="Clark A.G."/>
            <person name="Waterman M.S."/>
            <person name="Eichler E.E."/>
            <person name="Adams M.D."/>
            <person name="Hunkapiller M.W."/>
            <person name="Myers E.W."/>
            <person name="Venter J.C."/>
        </authorList>
    </citation>
    <scope>NUCLEOTIDE SEQUENCE [LARGE SCALE GENOMIC DNA]</scope>
</reference>
<reference key="7">
    <citation type="journal article" date="2004" name="Genome Res.">
        <title>The status, quality, and expansion of the NIH full-length cDNA project: the Mammalian Gene Collection (MGC).</title>
        <authorList>
            <consortium name="The MGC Project Team"/>
        </authorList>
    </citation>
    <scope>NUCLEOTIDE SEQUENCE [LARGE SCALE MRNA] (ISOFORM SHORT)</scope>
    <scope>VARIANT VAL-37</scope>
    <source>
        <tissue>Bone marrow</tissue>
        <tissue>Brain</tissue>
        <tissue>Ovary</tissue>
        <tissue>Placenta</tissue>
        <tissue>Prostate</tissue>
    </source>
</reference>
<reference key="8">
    <citation type="submission" date="2008-12" db="UniProtKB">
        <authorList>
            <person name="Lubec G."/>
            <person name="Afjehi-Sadat L."/>
            <person name="Chen W.-Q."/>
            <person name="Sun Y."/>
        </authorList>
    </citation>
    <scope>PROTEIN SEQUENCE OF 4-18; 63-82; 97-107 AND 244-256</scope>
    <scope>IDENTIFICATION BY MASS SPECTROMETRY</scope>
    <source>
        <tissue>Brain</tissue>
        <tissue>Cajal-Retzius cell</tissue>
        <tissue>Fetal brain cortex</tissue>
    </source>
</reference>
<reference key="9">
    <citation type="journal article" date="1994" name="Biochem. Biophys. Res. Commun.">
        <title>Human proteasome subunits from 2-dimensional gels identified by partial sequencing.</title>
        <authorList>
            <person name="Kristensen P."/>
            <person name="Johnsen A.H."/>
            <person name="Uerkvitz W."/>
            <person name="Tanaka K."/>
            <person name="Hendil K.B."/>
        </authorList>
    </citation>
    <scope>PROTEIN SEQUENCE OF 63-82</scope>
</reference>
<reference key="10">
    <citation type="journal article" date="1996" name="Nature">
        <title>A role for the proteasome regulator PA28alpha in antigen presentation.</title>
        <authorList>
            <person name="Groettrup M."/>
            <person name="Soza A."/>
            <person name="Eggers M."/>
            <person name="Kuehn L."/>
            <person name="Dick T.P."/>
            <person name="Schild H."/>
            <person name="Rammensee H.G."/>
            <person name="Koszinowski U.H."/>
            <person name="Kloetzel P.M."/>
        </authorList>
    </citation>
    <scope>FUNCTION IN ANTIGEN PRESENTATION</scope>
</reference>
<reference key="11">
    <citation type="journal article" date="2002" name="Mol. Biol. Cell">
        <title>Clastosome: a subtype of nuclear body enriched in 19S and 20S proteasomes, ubiquitin, and protein substrates of proteasome.</title>
        <authorList>
            <person name="Lafarga M."/>
            <person name="Berciano M.T."/>
            <person name="Pena E."/>
            <person name="Mayo I."/>
            <person name="Castano J.G."/>
            <person name="Bohmann D."/>
            <person name="Rodrigues J.P."/>
            <person name="Tavanez J.P."/>
            <person name="Carmo-Fonseca M."/>
        </authorList>
    </citation>
    <scope>SUBCELLULAR LOCATION</scope>
</reference>
<reference key="12">
    <citation type="journal article" date="2004" name="Biomacromolecules">
        <title>20S proteasome prevents aggregation of heat-denatured proteins without PA700 regulatory subcomplex like a molecular chaperone.</title>
        <authorList>
            <person name="Yano M."/>
            <person name="Koumoto Y."/>
            <person name="Kanesaki Y."/>
            <person name="Wu X."/>
            <person name="Kido H."/>
        </authorList>
    </citation>
    <scope>FUNCTION</scope>
</reference>
<reference key="13">
    <citation type="journal article" date="2006" name="Genomics Proteomics Bioinformatics">
        <title>Comparative proteome analysis of breast cancer and adjacent normal breast tissues in human.</title>
        <authorList>
            <person name="Deng S."/>
            <person name="Xing T."/>
            <person name="Zhou H."/>
            <person name="Xiong R."/>
            <person name="Lu Y."/>
            <person name="Wen B."/>
            <person name="Liu S."/>
            <person name="Yang J."/>
        </authorList>
    </citation>
    <scope>INDUCTION</scope>
    <scope>IDENTIFICATION BY MASS SPECTROMETRY</scope>
</reference>
<reference key="14">
    <citation type="journal article" date="2006" name="Proteomics">
        <title>The up-regulation of proteasome subunits and lysosomal proteases in hepatocellular carcinomas of the HBx gene knockin transgenic mice.</title>
        <authorList>
            <person name="Cui F."/>
            <person name="Wang Y."/>
            <person name="Wang J."/>
            <person name="Wei K."/>
            <person name="Hu J."/>
            <person name="Liu F."/>
            <person name="Wang H."/>
            <person name="Zhao X."/>
            <person name="Zhang X."/>
            <person name="Yang X."/>
        </authorList>
    </citation>
    <scope>INDUCTION</scope>
</reference>
<reference key="15">
    <citation type="journal article" date="2007" name="Biochem. Biophys. Res. Commun.">
        <title>Conserved signal peptide of Notch3 inhibits interaction with proteasome.</title>
        <authorList>
            <person name="Zhang Y."/>
            <person name="Jia L."/>
            <person name="Lee S.J."/>
            <person name="Wang M.M."/>
        </authorList>
    </citation>
    <scope>INTERACTION WITH NOTCH3</scope>
</reference>
<reference key="16">
    <citation type="journal article" date="2007" name="Biochemistry">
        <title>Mass spectrometric characterization of the affinity-purified human 26S proteasome complex.</title>
        <authorList>
            <person name="Wang X."/>
            <person name="Chen C.-F."/>
            <person name="Baker P.R."/>
            <person name="Chen P.-L."/>
            <person name="Kaiser P."/>
            <person name="Huang L."/>
        </authorList>
    </citation>
    <scope>IDENTIFICATION BY MASS SPECTROMETRY [LARGE SCALE ANALYSIS]</scope>
    <source>
        <tissue>Embryonic kidney</tissue>
    </source>
</reference>
<reference key="17">
    <citation type="journal article" date="2007" name="Breast Cancer Res. Treat.">
        <title>Over-expression of genes and proteins of ubiquitin specific peptidases (USPs) and proteasome subunits (PSs) in breast cancer tissue observed by the methods of RFDD-PCR and proteomics.</title>
        <authorList>
            <person name="Deng S."/>
            <person name="Zhou H."/>
            <person name="Xiong R."/>
            <person name="Lu Y."/>
            <person name="Yan D."/>
            <person name="Xing T."/>
            <person name="Dong L."/>
            <person name="Tang E."/>
            <person name="Yang H."/>
        </authorList>
    </citation>
    <scope>INDUCTION</scope>
    <scope>IDENTIFICATION BY MASS SPECTROMETRY</scope>
</reference>
<reference key="18">
    <citation type="journal article" date="2011" name="BMC Syst. Biol.">
        <title>Initial characterization of the human central proteome.</title>
        <authorList>
            <person name="Burkard T.R."/>
            <person name="Planyavsky M."/>
            <person name="Kaupe I."/>
            <person name="Breitwieser F.P."/>
            <person name="Buerckstuemmer T."/>
            <person name="Bennett K.L."/>
            <person name="Superti-Furga G."/>
            <person name="Colinge J."/>
        </authorList>
    </citation>
    <scope>IDENTIFICATION BY MASS SPECTROMETRY [LARGE SCALE ANALYSIS]</scope>
</reference>
<reference key="19">
    <citation type="journal article" date="2013" name="Annu. Rev. Biochem.">
        <title>Molecular architecture and assembly of the eukaryotic proteasome.</title>
        <authorList>
            <person name="Tomko R.J. Jr."/>
            <person name="Hochstrasser M."/>
        </authorList>
    </citation>
    <scope>NOMENCLATURE</scope>
</reference>
<reference key="20">
    <citation type="journal article" date="2013" name="J. Proteome Res.">
        <title>Toward a comprehensive characterization of a human cancer cell phosphoproteome.</title>
        <authorList>
            <person name="Zhou H."/>
            <person name="Di Palma S."/>
            <person name="Preisinger C."/>
            <person name="Peng M."/>
            <person name="Polat A.N."/>
            <person name="Heck A.J."/>
            <person name="Mohammed S."/>
        </authorList>
    </citation>
    <scope>PHOSPHORYLATION [LARGE SCALE ANALYSIS] AT SER-110 AND SER-177</scope>
    <scope>IDENTIFICATION BY MASS SPECTROMETRY [LARGE SCALE ANALYSIS]</scope>
    <source>
        <tissue>Erythroleukemia</tissue>
    </source>
</reference>
<reference key="21">
    <citation type="journal article" date="2014" name="J. Proteomics">
        <title>An enzyme assisted RP-RPLC approach for in-depth analysis of human liver phosphoproteome.</title>
        <authorList>
            <person name="Bian Y."/>
            <person name="Song C."/>
            <person name="Cheng K."/>
            <person name="Dong M."/>
            <person name="Wang F."/>
            <person name="Huang J."/>
            <person name="Sun D."/>
            <person name="Wang L."/>
            <person name="Ye M."/>
            <person name="Zou H."/>
        </authorList>
    </citation>
    <scope>IDENTIFICATION BY MASS SPECTROMETRY [LARGE SCALE ANALYSIS]</scope>
    <source>
        <tissue>Liver</tissue>
    </source>
</reference>
<reference key="22">
    <citation type="journal article" date="2015" name="Proteomics">
        <title>N-terminome analysis of the human mitochondrial proteome.</title>
        <authorList>
            <person name="Vaca Jacome A.S."/>
            <person name="Rabilloud T."/>
            <person name="Schaeffer-Reiss C."/>
            <person name="Rompais M."/>
            <person name="Ayoub D."/>
            <person name="Lane L."/>
            <person name="Bairoch A."/>
            <person name="Van Dorsselaer A."/>
            <person name="Carapito C."/>
        </authorList>
    </citation>
    <scope>IDENTIFICATION BY MASS SPECTROMETRY [LARGE SCALE ANALYSIS]</scope>
</reference>
<reference key="23">
    <citation type="journal article" date="2016" name="Biol. Chem.">
        <title>Human 20S proteasome activity towards fluorogenic peptides of various chain lengths.</title>
        <authorList>
            <person name="Rut W."/>
            <person name="Drag M."/>
        </authorList>
    </citation>
    <scope>FUNCTION</scope>
    <scope>CATALYTIC ACTIVITY</scope>
</reference>
<reference key="24">
    <citation type="journal article" date="2018" name="Mol. Cell">
        <title>ZFAND1 recruits p97 and the 26S proteasome to promote the clearance of arsenite-induced stress granules.</title>
        <authorList>
            <person name="Turakhiya A."/>
            <person name="Meyer S.R."/>
            <person name="Marincola G."/>
            <person name="Boehm S."/>
            <person name="Vanselow J.T."/>
            <person name="Schlosser A."/>
            <person name="Hofmann K."/>
            <person name="Buchberger A."/>
        </authorList>
    </citation>
    <scope>INTERACTION WITH ZFAND1</scope>
</reference>
<reference key="25">
    <citation type="journal article" date="2015" name="Nat. Commun.">
        <title>Cryo-EM reveals the conformation of a substrate analogue in the human 20S proteasome core.</title>
        <authorList>
            <person name="da Fonseca P.C."/>
            <person name="Morris E.P."/>
        </authorList>
    </citation>
    <scope>STRUCTURE BY ELECTRON MICROSCOPY (3.50 ANGSTROMS)</scope>
    <scope>SUBUNIT</scope>
</reference>
<reference key="26">
    <citation type="journal article" date="2015" name="Structure">
        <title>Crystal structure of the human 20S proteasome in complex with carfilzomib.</title>
        <authorList>
            <person name="Harshbarger W."/>
            <person name="Miller C."/>
            <person name="Diedrich C."/>
            <person name="Sacchettini J."/>
        </authorList>
    </citation>
    <scope>X-RAY CRYSTALLOGRAPHY (2.60 ANGSTROMS) OF 4-241</scope>
    <scope>SUBUNIT</scope>
</reference>
<reference key="27">
    <citation type="journal article" date="2016" name="Nat. Struct. Mol. Biol.">
        <title>An atomic structure of the human 26S proteasome.</title>
        <authorList>
            <person name="Huang X."/>
            <person name="Luan B."/>
            <person name="Wu J."/>
            <person name="Shi Y."/>
        </authorList>
    </citation>
    <scope>STRUCTURE BY ELECTRON MICROSCOPY (3.50 ANGSTROMS)</scope>
    <scope>SUBUNIT</scope>
</reference>
<reference key="28">
    <citation type="journal article" date="2016" name="Proc. Natl. Acad. Sci. U.S.A.">
        <title>Structure of the human 26S proteasome at a resolution of 3.9 Aa.</title>
        <authorList>
            <person name="Schweitzer A."/>
            <person name="Aufderheide A."/>
            <person name="Rudack T."/>
            <person name="Beck F."/>
            <person name="Pfeifer G."/>
            <person name="Plitzko J.M."/>
            <person name="Sakata E."/>
            <person name="Schulten K."/>
            <person name="Foerster F."/>
            <person name="Baumeister W."/>
        </authorList>
    </citation>
    <scope>STRUCTURE BY ELECTRON MICROSCOPY (4.02 ANGSTROMS)</scope>
    <scope>SUBUNIT</scope>
</reference>
<reference key="29">
    <citation type="journal article" date="2016" name="Science">
        <title>The inhibition mechanism of human 20S proteasomes enables next-generation inhibitor design.</title>
        <authorList>
            <person name="Schrader J."/>
            <person name="Henneberg F."/>
            <person name="Mata R.A."/>
            <person name="Tittmann K."/>
            <person name="Schneider T.R."/>
            <person name="Stark H."/>
            <person name="Bourenkov G."/>
            <person name="Chari A."/>
        </authorList>
    </citation>
    <scope>X-RAY CRYSTALLOGRAPHY (1.80 ANGSTROMS)</scope>
    <scope>SUBUNIT</scope>
</reference>
<reference key="30">
    <citation type="journal article" date="2021" name="Nature">
        <title>AKIRIN2 controls the nuclear import of proteasomes in vertebrates.</title>
        <authorList>
            <person name="de Almeida M."/>
            <person name="Hinterndorfer M."/>
            <person name="Brunner H."/>
            <person name="Grishkovskaya I."/>
            <person name="Singh K."/>
            <person name="Schleiffer A."/>
            <person name="Jude J."/>
            <person name="Deswal S."/>
            <person name="Kalis R."/>
            <person name="Vunjak M."/>
            <person name="Lendl T."/>
            <person name="Imre R."/>
            <person name="Roitinger E."/>
            <person name="Neumann T."/>
            <person name="Kandolf S."/>
            <person name="Schutzbier M."/>
            <person name="Mechtler K."/>
            <person name="Versteeg G.A."/>
            <person name="Haselbach D."/>
            <person name="Zuber J."/>
        </authorList>
    </citation>
    <scope>STRUCTURE BY ELECTRON MICROSCOPY (2.80 ANGSTROMS) IN COMPLEX WITH AKIRIN2</scope>
    <scope>SUBUNIT</scope>
    <scope>SUBCELLULAR LOCATION</scope>
</reference>
<dbReference type="EMBL" id="X61969">
    <property type="protein sequence ID" value="CAA43961.1"/>
    <property type="molecule type" value="mRNA"/>
</dbReference>
<dbReference type="EMBL" id="D00759">
    <property type="protein sequence ID" value="BAA00656.1"/>
    <property type="molecule type" value="mRNA"/>
</dbReference>
<dbReference type="EMBL" id="M64992">
    <property type="protein sequence ID" value="AAA92734.1"/>
    <property type="molecule type" value="mRNA"/>
</dbReference>
<dbReference type="EMBL" id="BT006647">
    <property type="protein sequence ID" value="AAP35293.1"/>
    <property type="molecule type" value="mRNA"/>
</dbReference>
<dbReference type="EMBL" id="AK290765">
    <property type="protein sequence ID" value="BAF83454.1"/>
    <property type="molecule type" value="mRNA"/>
</dbReference>
<dbReference type="EMBL" id="CH471064">
    <property type="protein sequence ID" value="EAW68479.1"/>
    <property type="molecule type" value="Genomic_DNA"/>
</dbReference>
<dbReference type="EMBL" id="BC002577">
    <property type="protein sequence ID" value="AAH02577.1"/>
    <property type="molecule type" value="mRNA"/>
</dbReference>
<dbReference type="EMBL" id="BC005932">
    <property type="protein sequence ID" value="AAH05932.1"/>
    <property type="molecule type" value="mRNA"/>
</dbReference>
<dbReference type="EMBL" id="BC008472">
    <property type="protein sequence ID" value="AAH08472.1"/>
    <property type="molecule type" value="mRNA"/>
</dbReference>
<dbReference type="EMBL" id="BC009576">
    <property type="protein sequence ID" value="AAH09576.1"/>
    <property type="molecule type" value="mRNA"/>
</dbReference>
<dbReference type="EMBL" id="BC015105">
    <property type="protein sequence ID" value="AAH15105.1"/>
    <property type="molecule type" value="mRNA"/>
</dbReference>
<dbReference type="EMBL" id="BC015356">
    <property type="protein sequence ID" value="AAH15356.1"/>
    <property type="molecule type" value="mRNA"/>
</dbReference>
<dbReference type="EMBL" id="BC022372">
    <property type="protein sequence ID" value="AAH22372.1"/>
    <property type="molecule type" value="mRNA"/>
</dbReference>
<dbReference type="CCDS" id="CCDS31431.1">
    <molecule id="P25786-2"/>
</dbReference>
<dbReference type="CCDS" id="CCDS7816.1">
    <molecule id="P25786-1"/>
</dbReference>
<dbReference type="PIR" id="JC1445">
    <property type="entry name" value="JC1445"/>
</dbReference>
<dbReference type="RefSeq" id="NP_002777.1">
    <molecule id="P25786-1"/>
    <property type="nucleotide sequence ID" value="NM_002786.4"/>
</dbReference>
<dbReference type="RefSeq" id="NP_683877.1">
    <molecule id="P25786-2"/>
    <property type="nucleotide sequence ID" value="NM_148976.3"/>
</dbReference>
<dbReference type="PDB" id="4R3O">
    <property type="method" value="X-ray"/>
    <property type="resolution" value="2.60 A"/>
    <property type="chains" value="F/T=4-241"/>
</dbReference>
<dbReference type="PDB" id="4R67">
    <property type="method" value="X-ray"/>
    <property type="resolution" value="2.89 A"/>
    <property type="chains" value="F/T/h/v=4-241"/>
</dbReference>
<dbReference type="PDB" id="5A0Q">
    <property type="method" value="EM"/>
    <property type="resolution" value="3.50 A"/>
    <property type="chains" value="F/T=1-263"/>
</dbReference>
<dbReference type="PDB" id="5GJQ">
    <property type="method" value="EM"/>
    <property type="resolution" value="4.50 A"/>
    <property type="chains" value="G/m=1-263"/>
</dbReference>
<dbReference type="PDB" id="5GJR">
    <property type="method" value="EM"/>
    <property type="resolution" value="3.50 A"/>
    <property type="chains" value="G/m=1-263"/>
</dbReference>
<dbReference type="PDB" id="5L4G">
    <property type="method" value="EM"/>
    <property type="resolution" value="4.02 A"/>
    <property type="chains" value="F/S=1-263"/>
</dbReference>
<dbReference type="PDB" id="5LE5">
    <property type="method" value="X-ray"/>
    <property type="resolution" value="1.80 A"/>
    <property type="chains" value="E/S=1-263"/>
</dbReference>
<dbReference type="PDB" id="5LEX">
    <property type="method" value="X-ray"/>
    <property type="resolution" value="2.20 A"/>
    <property type="chains" value="E/S=1-263"/>
</dbReference>
<dbReference type="PDB" id="5LEY">
    <property type="method" value="X-ray"/>
    <property type="resolution" value="1.90 A"/>
    <property type="chains" value="E/S=1-263"/>
</dbReference>
<dbReference type="PDB" id="5LEZ">
    <property type="method" value="X-ray"/>
    <property type="resolution" value="2.19 A"/>
    <property type="chains" value="E/S=1-263"/>
</dbReference>
<dbReference type="PDB" id="5LF0">
    <property type="method" value="X-ray"/>
    <property type="resolution" value="2.41 A"/>
    <property type="chains" value="E/S=1-263"/>
</dbReference>
<dbReference type="PDB" id="5LF1">
    <property type="method" value="X-ray"/>
    <property type="resolution" value="2.00 A"/>
    <property type="chains" value="E/S=1-263"/>
</dbReference>
<dbReference type="PDB" id="5LF3">
    <property type="method" value="X-ray"/>
    <property type="resolution" value="2.10 A"/>
    <property type="chains" value="E/S=1-263"/>
</dbReference>
<dbReference type="PDB" id="5LF4">
    <property type="method" value="X-ray"/>
    <property type="resolution" value="1.99 A"/>
    <property type="chains" value="E/S=1-263"/>
</dbReference>
<dbReference type="PDB" id="5LF6">
    <property type="method" value="X-ray"/>
    <property type="resolution" value="2.07 A"/>
    <property type="chains" value="E/S=1-263"/>
</dbReference>
<dbReference type="PDB" id="5LF7">
    <property type="method" value="X-ray"/>
    <property type="resolution" value="2.00 A"/>
    <property type="chains" value="E/S=1-263"/>
</dbReference>
<dbReference type="PDB" id="5LN3">
    <property type="method" value="EM"/>
    <property type="resolution" value="6.80 A"/>
    <property type="chains" value="F=1-263"/>
</dbReference>
<dbReference type="PDB" id="5M32">
    <property type="method" value="EM"/>
    <property type="resolution" value="3.80 A"/>
    <property type="chains" value="E/S=2-239"/>
</dbReference>
<dbReference type="PDB" id="5T0C">
    <property type="method" value="EM"/>
    <property type="resolution" value="3.80 A"/>
    <property type="chains" value="AL/BL=2-263"/>
</dbReference>
<dbReference type="PDB" id="5T0G">
    <property type="method" value="EM"/>
    <property type="resolution" value="4.40 A"/>
    <property type="chains" value="L=2-263"/>
</dbReference>
<dbReference type="PDB" id="5T0H">
    <property type="method" value="EM"/>
    <property type="resolution" value="6.80 A"/>
    <property type="chains" value="L=2-263"/>
</dbReference>
<dbReference type="PDB" id="5T0I">
    <property type="method" value="EM"/>
    <property type="resolution" value="8.00 A"/>
    <property type="chains" value="L=2-263"/>
</dbReference>
<dbReference type="PDB" id="5T0J">
    <property type="method" value="EM"/>
    <property type="resolution" value="8.00 A"/>
    <property type="chains" value="L=2-263"/>
</dbReference>
<dbReference type="PDB" id="5VFO">
    <property type="method" value="EM"/>
    <property type="resolution" value="3.50 A"/>
    <property type="chains" value="L/l=4-241"/>
</dbReference>
<dbReference type="PDB" id="5VFP">
    <property type="method" value="EM"/>
    <property type="resolution" value="4.20 A"/>
    <property type="chains" value="L/l=4-241"/>
</dbReference>
<dbReference type="PDB" id="5VFQ">
    <property type="method" value="EM"/>
    <property type="resolution" value="4.20 A"/>
    <property type="chains" value="L/l=4-241"/>
</dbReference>
<dbReference type="PDB" id="5VFR">
    <property type="method" value="EM"/>
    <property type="resolution" value="4.90 A"/>
    <property type="chains" value="L/l=4-241"/>
</dbReference>
<dbReference type="PDB" id="5VFS">
    <property type="method" value="EM"/>
    <property type="resolution" value="3.60 A"/>
    <property type="chains" value="L/l=4-241"/>
</dbReference>
<dbReference type="PDB" id="5VFT">
    <property type="method" value="EM"/>
    <property type="resolution" value="7.00 A"/>
    <property type="chains" value="L/l=4-241"/>
</dbReference>
<dbReference type="PDB" id="5VFU">
    <property type="method" value="EM"/>
    <property type="resolution" value="5.80 A"/>
    <property type="chains" value="L/l=4-241"/>
</dbReference>
<dbReference type="PDB" id="6AVO">
    <property type="method" value="EM"/>
    <property type="resolution" value="3.80 A"/>
    <property type="chains" value="G/L=1-263"/>
</dbReference>
<dbReference type="PDB" id="6E5B">
    <property type="method" value="X-ray"/>
    <property type="resolution" value="2.77 A"/>
    <property type="chains" value="E/S=1-263"/>
</dbReference>
<dbReference type="PDB" id="6KWY">
    <property type="method" value="EM"/>
    <property type="resolution" value="2.72 A"/>
    <property type="chains" value="E/S=1-263"/>
</dbReference>
<dbReference type="PDB" id="6MSB">
    <property type="method" value="EM"/>
    <property type="resolution" value="3.00 A"/>
    <property type="chains" value="L/l=2-263"/>
</dbReference>
<dbReference type="PDB" id="6MSD">
    <property type="method" value="EM"/>
    <property type="resolution" value="3.20 A"/>
    <property type="chains" value="L/l=2-263"/>
</dbReference>
<dbReference type="PDB" id="6MSE">
    <property type="method" value="EM"/>
    <property type="resolution" value="3.30 A"/>
    <property type="chains" value="Z=56-234"/>
</dbReference>
<dbReference type="PDB" id="6MSG">
    <property type="method" value="EM"/>
    <property type="resolution" value="3.50 A"/>
    <property type="chains" value="L/l=2-263"/>
</dbReference>
<dbReference type="PDB" id="6MSH">
    <property type="method" value="EM"/>
    <property type="resolution" value="3.60 A"/>
    <property type="chains" value="L/l=2-263"/>
</dbReference>
<dbReference type="PDB" id="6MSJ">
    <property type="method" value="EM"/>
    <property type="resolution" value="3.30 A"/>
    <property type="chains" value="L/l=2-263"/>
</dbReference>
<dbReference type="PDB" id="6MSK">
    <property type="method" value="EM"/>
    <property type="resolution" value="3.20 A"/>
    <property type="chains" value="L/l=2-263"/>
</dbReference>
<dbReference type="PDB" id="6R70">
    <property type="method" value="EM"/>
    <property type="resolution" value="3.50 A"/>
    <property type="chains" value="E/S=2-239"/>
</dbReference>
<dbReference type="PDB" id="6REY">
    <property type="method" value="EM"/>
    <property type="resolution" value="3.00 A"/>
    <property type="chains" value="F/T=1-263"/>
</dbReference>
<dbReference type="PDB" id="6RGQ">
    <property type="method" value="EM"/>
    <property type="resolution" value="2.60 A"/>
    <property type="chains" value="F/T=1-263"/>
</dbReference>
<dbReference type="PDB" id="6WJD">
    <property type="method" value="EM"/>
    <property type="resolution" value="4.80 A"/>
    <property type="chains" value="L/l=2-263"/>
</dbReference>
<dbReference type="PDB" id="6WJN">
    <property type="method" value="EM"/>
    <property type="resolution" value="5.70 A"/>
    <property type="chains" value="L/l=4-241"/>
</dbReference>
<dbReference type="PDB" id="6XMJ">
    <property type="method" value="EM"/>
    <property type="resolution" value="3.00 A"/>
    <property type="chains" value="F=4-241"/>
</dbReference>
<dbReference type="PDB" id="7AWE">
    <property type="method" value="X-ray"/>
    <property type="resolution" value="2.29 A"/>
    <property type="chains" value="F/T=4-239"/>
</dbReference>
<dbReference type="PDB" id="7B12">
    <property type="method" value="X-ray"/>
    <property type="resolution" value="2.43 A"/>
    <property type="chains" value="F/T=4-239"/>
</dbReference>
<dbReference type="PDB" id="7LXV">
    <property type="method" value="EM"/>
    <property type="resolution" value="3.40 A"/>
    <property type="chains" value="E/S=1-263"/>
</dbReference>
<dbReference type="PDB" id="7NAN">
    <property type="method" value="EM"/>
    <property type="resolution" value="2.80 A"/>
    <property type="chains" value="E/S=1-263"/>
</dbReference>
<dbReference type="PDB" id="7NAO">
    <property type="method" value="EM"/>
    <property type="resolution" value="2.90 A"/>
    <property type="chains" value="E/S=1-263"/>
</dbReference>
<dbReference type="PDB" id="7NAP">
    <property type="method" value="EM"/>
    <property type="resolution" value="3.20 A"/>
    <property type="chains" value="E/S=1-263"/>
</dbReference>
<dbReference type="PDB" id="7NAQ">
    <property type="method" value="EM"/>
    <property type="resolution" value="3.20 A"/>
    <property type="chains" value="E/S=1-263"/>
</dbReference>
<dbReference type="PDB" id="7NHT">
    <property type="method" value="EM"/>
    <property type="resolution" value="2.80 A"/>
    <property type="chains" value="E=1-263"/>
</dbReference>
<dbReference type="PDB" id="7PG9">
    <property type="method" value="EM"/>
    <property type="resolution" value="3.70 A"/>
    <property type="chains" value="F/T=1-263"/>
</dbReference>
<dbReference type="PDB" id="7QXN">
    <property type="method" value="EM"/>
    <property type="resolution" value="3.70 A"/>
    <property type="chains" value="L/l=2-263"/>
</dbReference>
<dbReference type="PDB" id="7QXP">
    <property type="method" value="EM"/>
    <property type="resolution" value="3.60 A"/>
    <property type="chains" value="L/l=2-263"/>
</dbReference>
<dbReference type="PDB" id="7QXU">
    <property type="method" value="EM"/>
    <property type="resolution" value="4.30 A"/>
    <property type="chains" value="L/l=2-263"/>
</dbReference>
<dbReference type="PDB" id="7QXW">
    <property type="method" value="EM"/>
    <property type="resolution" value="4.10 A"/>
    <property type="chains" value="L/l=2-263"/>
</dbReference>
<dbReference type="PDB" id="7QXX">
    <property type="method" value="EM"/>
    <property type="resolution" value="4.40 A"/>
    <property type="chains" value="L/l=2-263"/>
</dbReference>
<dbReference type="PDB" id="7QY7">
    <property type="method" value="EM"/>
    <property type="resolution" value="4.70 A"/>
    <property type="chains" value="L/l=2-263"/>
</dbReference>
<dbReference type="PDB" id="7QYA">
    <property type="method" value="EM"/>
    <property type="resolution" value="4.80 A"/>
    <property type="chains" value="L/l=2-263"/>
</dbReference>
<dbReference type="PDB" id="7QYB">
    <property type="method" value="EM"/>
    <property type="resolution" value="4.10 A"/>
    <property type="chains" value="L/l=2-263"/>
</dbReference>
<dbReference type="PDB" id="7V5G">
    <property type="method" value="EM"/>
    <property type="resolution" value="4.47 A"/>
    <property type="chains" value="T/a=1-263"/>
</dbReference>
<dbReference type="PDB" id="7V5M">
    <property type="method" value="EM"/>
    <property type="resolution" value="3.88 A"/>
    <property type="chains" value="F/T=1-263"/>
</dbReference>
<dbReference type="PDB" id="7W37">
    <property type="method" value="EM"/>
    <property type="resolution" value="3.00 A"/>
    <property type="chains" value="L/l=2-263"/>
</dbReference>
<dbReference type="PDB" id="7W38">
    <property type="method" value="EM"/>
    <property type="resolution" value="3.10 A"/>
    <property type="chains" value="L/l=2-263"/>
</dbReference>
<dbReference type="PDB" id="7W39">
    <property type="method" value="EM"/>
    <property type="resolution" value="3.20 A"/>
    <property type="chains" value="L/l=2-263"/>
</dbReference>
<dbReference type="PDB" id="7W3A">
    <property type="method" value="EM"/>
    <property type="resolution" value="3.50 A"/>
    <property type="chains" value="L/l=2-263"/>
</dbReference>
<dbReference type="PDB" id="7W3B">
    <property type="method" value="EM"/>
    <property type="resolution" value="3.60 A"/>
    <property type="chains" value="L/l=2-263"/>
</dbReference>
<dbReference type="PDB" id="7W3C">
    <property type="method" value="EM"/>
    <property type="resolution" value="3.40 A"/>
    <property type="chains" value="L/l=2-263"/>
</dbReference>
<dbReference type="PDB" id="7W3F">
    <property type="method" value="EM"/>
    <property type="resolution" value="3.30 A"/>
    <property type="chains" value="L/l=2-263"/>
</dbReference>
<dbReference type="PDB" id="7W3G">
    <property type="method" value="EM"/>
    <property type="resolution" value="3.20 A"/>
    <property type="chains" value="L/l=2-263"/>
</dbReference>
<dbReference type="PDB" id="7W3H">
    <property type="method" value="EM"/>
    <property type="resolution" value="3.20 A"/>
    <property type="chains" value="L/l=2-263"/>
</dbReference>
<dbReference type="PDB" id="7W3I">
    <property type="method" value="EM"/>
    <property type="resolution" value="3.50 A"/>
    <property type="chains" value="L/l=2-263"/>
</dbReference>
<dbReference type="PDB" id="7W3J">
    <property type="method" value="EM"/>
    <property type="resolution" value="3.50 A"/>
    <property type="chains" value="L/l=2-263"/>
</dbReference>
<dbReference type="PDB" id="7W3K">
    <property type="method" value="EM"/>
    <property type="resolution" value="3.60 A"/>
    <property type="chains" value="L/l=2-263"/>
</dbReference>
<dbReference type="PDB" id="7W3M">
    <property type="method" value="EM"/>
    <property type="resolution" value="3.50 A"/>
    <property type="chains" value="L/l=2-263"/>
</dbReference>
<dbReference type="PDB" id="8BZL">
    <property type="method" value="X-ray"/>
    <property type="resolution" value="2.14 A"/>
    <property type="chains" value="E/S=1-263"/>
</dbReference>
<dbReference type="PDB" id="8CVR">
    <property type="method" value="EM"/>
    <property type="resolution" value="2.70 A"/>
    <property type="chains" value="F/T=1-263"/>
</dbReference>
<dbReference type="PDB" id="8CVS">
    <property type="method" value="EM"/>
    <property type="resolution" value="3.10 A"/>
    <property type="chains" value="E/S=1-263"/>
</dbReference>
<dbReference type="PDB" id="8CVT">
    <property type="method" value="EM"/>
    <property type="resolution" value="3.00 A"/>
    <property type="chains" value="L/l=1-263"/>
</dbReference>
<dbReference type="PDB" id="8CXB">
    <property type="method" value="EM"/>
    <property type="resolution" value="2.90 A"/>
    <property type="chains" value="E/S=1-263"/>
</dbReference>
<dbReference type="PDB" id="8JRI">
    <property type="method" value="EM"/>
    <property type="resolution" value="3.40 A"/>
    <property type="chains" value="L=1-263"/>
</dbReference>
<dbReference type="PDB" id="8JRT">
    <property type="method" value="EM"/>
    <property type="resolution" value="3.60 A"/>
    <property type="chains" value="L=1-263"/>
</dbReference>
<dbReference type="PDB" id="8JTI">
    <property type="method" value="EM"/>
    <property type="resolution" value="3.80 A"/>
    <property type="chains" value="L=1-263"/>
</dbReference>
<dbReference type="PDB" id="8K0G">
    <property type="method" value="EM"/>
    <property type="resolution" value="3.80 A"/>
    <property type="chains" value="L=1-263"/>
</dbReference>
<dbReference type="PDB" id="8QYJ">
    <property type="method" value="EM"/>
    <property type="resolution" value="2.73 A"/>
    <property type="chains" value="E=1-263"/>
</dbReference>
<dbReference type="PDB" id="8QYL">
    <property type="method" value="EM"/>
    <property type="resolution" value="2.67 A"/>
    <property type="chains" value="E=1-263"/>
</dbReference>
<dbReference type="PDB" id="8QYM">
    <property type="method" value="EM"/>
    <property type="resolution" value="2.73 A"/>
    <property type="chains" value="E=1-263"/>
</dbReference>
<dbReference type="PDB" id="8QYN">
    <property type="method" value="EM"/>
    <property type="resolution" value="2.88 A"/>
    <property type="chains" value="E=1-263"/>
</dbReference>
<dbReference type="PDB" id="8QYO">
    <property type="method" value="EM"/>
    <property type="resolution" value="2.84 A"/>
    <property type="chains" value="E/S=1-263"/>
</dbReference>
<dbReference type="PDB" id="8QYS">
    <property type="method" value="EM"/>
    <property type="resolution" value="3.89 A"/>
    <property type="chains" value="E/V=1-241"/>
</dbReference>
<dbReference type="PDB" id="8QZ9">
    <property type="method" value="EM"/>
    <property type="resolution" value="2.95 A"/>
    <property type="chains" value="E=1-263"/>
</dbReference>
<dbReference type="PDB" id="8TM3">
    <property type="method" value="EM"/>
    <property type="resolution" value="3.00 A"/>
    <property type="chains" value="E=1-263"/>
</dbReference>
<dbReference type="PDB" id="8TM4">
    <property type="method" value="EM"/>
    <property type="resolution" value="3.00 A"/>
    <property type="chains" value="E=1-263"/>
</dbReference>
<dbReference type="PDB" id="8TM5">
    <property type="method" value="EM"/>
    <property type="resolution" value="3.00 A"/>
    <property type="chains" value="E=1-263"/>
</dbReference>
<dbReference type="PDB" id="8TM6">
    <property type="method" value="EM"/>
    <property type="resolution" value="2.80 A"/>
    <property type="chains" value="E/S=1-263"/>
</dbReference>
<dbReference type="PDB" id="8UD9">
    <property type="method" value="EM"/>
    <property type="resolution" value="2.04 A"/>
    <property type="chains" value="F/T=1-263"/>
</dbReference>
<dbReference type="PDB" id="8USB">
    <property type="method" value="EM"/>
    <property type="resolution" value="2.73 A"/>
    <property type="chains" value="L=1-263"/>
</dbReference>
<dbReference type="PDB" id="8USC">
    <property type="method" value="EM"/>
    <property type="resolution" value="3.10 A"/>
    <property type="chains" value="L=1-263"/>
</dbReference>
<dbReference type="PDB" id="8YIX">
    <property type="method" value="EM"/>
    <property type="resolution" value="2.91 A"/>
    <property type="chains" value="E=1-263"/>
</dbReference>
<dbReference type="PDB" id="8YIY">
    <property type="method" value="EM"/>
    <property type="resolution" value="3.41 A"/>
    <property type="chains" value="E/S=1-263"/>
</dbReference>
<dbReference type="PDB" id="8YIZ">
    <property type="method" value="EM"/>
    <property type="resolution" value="3.79 A"/>
    <property type="chains" value="E/S=1-263"/>
</dbReference>
<dbReference type="PDB" id="9E8G">
    <property type="method" value="EM"/>
    <property type="resolution" value="3.01 A"/>
    <property type="chains" value="L=1-263"/>
</dbReference>
<dbReference type="PDB" id="9E8H">
    <property type="method" value="EM"/>
    <property type="resolution" value="2.90 A"/>
    <property type="chains" value="L=1-263"/>
</dbReference>
<dbReference type="PDB" id="9E8I">
    <property type="method" value="EM"/>
    <property type="resolution" value="2.87 A"/>
    <property type="chains" value="L=1-263"/>
</dbReference>
<dbReference type="PDB" id="9E8J">
    <property type="method" value="EM"/>
    <property type="resolution" value="3.47 A"/>
    <property type="chains" value="L=1-263"/>
</dbReference>
<dbReference type="PDB" id="9E8K">
    <property type="method" value="EM"/>
    <property type="resolution" value="4.08 A"/>
    <property type="chains" value="L=1-263"/>
</dbReference>
<dbReference type="PDB" id="9E8L">
    <property type="method" value="EM"/>
    <property type="resolution" value="3.59 A"/>
    <property type="chains" value="L=1-263"/>
</dbReference>
<dbReference type="PDB" id="9E8N">
    <property type="method" value="EM"/>
    <property type="resolution" value="3.62 A"/>
    <property type="chains" value="L=1-263"/>
</dbReference>
<dbReference type="PDB" id="9E8O">
    <property type="method" value="EM"/>
    <property type="resolution" value="3.10 A"/>
    <property type="chains" value="L=1-263"/>
</dbReference>
<dbReference type="PDB" id="9E8Q">
    <property type="method" value="EM"/>
    <property type="resolution" value="3.16 A"/>
    <property type="chains" value="L=1-263"/>
</dbReference>
<dbReference type="PDB" id="9HMN">
    <property type="method" value="EM"/>
    <property type="resolution" value="2.55 A"/>
    <property type="chains" value="F/S=1-263"/>
</dbReference>
<dbReference type="PDBsum" id="4R3O"/>
<dbReference type="PDBsum" id="4R67"/>
<dbReference type="PDBsum" id="5A0Q"/>
<dbReference type="PDBsum" id="5GJQ"/>
<dbReference type="PDBsum" id="5GJR"/>
<dbReference type="PDBsum" id="5L4G"/>
<dbReference type="PDBsum" id="5LE5"/>
<dbReference type="PDBsum" id="5LEX"/>
<dbReference type="PDBsum" id="5LEY"/>
<dbReference type="PDBsum" id="5LEZ"/>
<dbReference type="PDBsum" id="5LF0"/>
<dbReference type="PDBsum" id="5LF1"/>
<dbReference type="PDBsum" id="5LF3"/>
<dbReference type="PDBsum" id="5LF4"/>
<dbReference type="PDBsum" id="5LF6"/>
<dbReference type="PDBsum" id="5LF7"/>
<dbReference type="PDBsum" id="5LN3"/>
<dbReference type="PDBsum" id="5M32"/>
<dbReference type="PDBsum" id="5T0C"/>
<dbReference type="PDBsum" id="5T0G"/>
<dbReference type="PDBsum" id="5T0H"/>
<dbReference type="PDBsum" id="5T0I"/>
<dbReference type="PDBsum" id="5T0J"/>
<dbReference type="PDBsum" id="5VFO"/>
<dbReference type="PDBsum" id="5VFP"/>
<dbReference type="PDBsum" id="5VFQ"/>
<dbReference type="PDBsum" id="5VFR"/>
<dbReference type="PDBsum" id="5VFS"/>
<dbReference type="PDBsum" id="5VFT"/>
<dbReference type="PDBsum" id="5VFU"/>
<dbReference type="PDBsum" id="6AVO"/>
<dbReference type="PDBsum" id="6E5B"/>
<dbReference type="PDBsum" id="6KWY"/>
<dbReference type="PDBsum" id="6MSB"/>
<dbReference type="PDBsum" id="6MSD"/>
<dbReference type="PDBsum" id="6MSE"/>
<dbReference type="PDBsum" id="6MSG"/>
<dbReference type="PDBsum" id="6MSH"/>
<dbReference type="PDBsum" id="6MSJ"/>
<dbReference type="PDBsum" id="6MSK"/>
<dbReference type="PDBsum" id="6R70"/>
<dbReference type="PDBsum" id="6REY"/>
<dbReference type="PDBsum" id="6RGQ"/>
<dbReference type="PDBsum" id="6WJD"/>
<dbReference type="PDBsum" id="6WJN"/>
<dbReference type="PDBsum" id="6XMJ"/>
<dbReference type="PDBsum" id="7AWE"/>
<dbReference type="PDBsum" id="7B12"/>
<dbReference type="PDBsum" id="7LXV"/>
<dbReference type="PDBsum" id="7NAN"/>
<dbReference type="PDBsum" id="7NAO"/>
<dbReference type="PDBsum" id="7NAP"/>
<dbReference type="PDBsum" id="7NAQ"/>
<dbReference type="PDBsum" id="7NHT"/>
<dbReference type="PDBsum" id="7PG9"/>
<dbReference type="PDBsum" id="7QXN"/>
<dbReference type="PDBsum" id="7QXP"/>
<dbReference type="PDBsum" id="7QXU"/>
<dbReference type="PDBsum" id="7QXW"/>
<dbReference type="PDBsum" id="7QXX"/>
<dbReference type="PDBsum" id="7QY7"/>
<dbReference type="PDBsum" id="7QYA"/>
<dbReference type="PDBsum" id="7QYB"/>
<dbReference type="PDBsum" id="7V5G"/>
<dbReference type="PDBsum" id="7V5M"/>
<dbReference type="PDBsum" id="7W37"/>
<dbReference type="PDBsum" id="7W38"/>
<dbReference type="PDBsum" id="7W39"/>
<dbReference type="PDBsum" id="7W3A"/>
<dbReference type="PDBsum" id="7W3B"/>
<dbReference type="PDBsum" id="7W3C"/>
<dbReference type="PDBsum" id="7W3F"/>
<dbReference type="PDBsum" id="7W3G"/>
<dbReference type="PDBsum" id="7W3H"/>
<dbReference type="PDBsum" id="7W3I"/>
<dbReference type="PDBsum" id="7W3J"/>
<dbReference type="PDBsum" id="7W3K"/>
<dbReference type="PDBsum" id="7W3M"/>
<dbReference type="PDBsum" id="8BZL"/>
<dbReference type="PDBsum" id="8CVR"/>
<dbReference type="PDBsum" id="8CVS"/>
<dbReference type="PDBsum" id="8CVT"/>
<dbReference type="PDBsum" id="8CXB"/>
<dbReference type="PDBsum" id="8JRI"/>
<dbReference type="PDBsum" id="8JRT"/>
<dbReference type="PDBsum" id="8JTI"/>
<dbReference type="PDBsum" id="8K0G"/>
<dbReference type="PDBsum" id="8QYJ"/>
<dbReference type="PDBsum" id="8QYL"/>
<dbReference type="PDBsum" id="8QYM"/>
<dbReference type="PDBsum" id="8QYN"/>
<dbReference type="PDBsum" id="8QYO"/>
<dbReference type="PDBsum" id="8QYS"/>
<dbReference type="PDBsum" id="8QZ9"/>
<dbReference type="PDBsum" id="8TM3"/>
<dbReference type="PDBsum" id="8TM4"/>
<dbReference type="PDBsum" id="8TM5"/>
<dbReference type="PDBsum" id="8TM6"/>
<dbReference type="PDBsum" id="8UD9"/>
<dbReference type="PDBsum" id="8USB"/>
<dbReference type="PDBsum" id="8USC"/>
<dbReference type="PDBsum" id="8YIX"/>
<dbReference type="PDBsum" id="8YIY"/>
<dbReference type="PDBsum" id="8YIZ"/>
<dbReference type="PDBsum" id="9E8G"/>
<dbReference type="PDBsum" id="9E8H"/>
<dbReference type="PDBsum" id="9E8I"/>
<dbReference type="PDBsum" id="9E8J"/>
<dbReference type="PDBsum" id="9E8K"/>
<dbReference type="PDBsum" id="9E8L"/>
<dbReference type="PDBsum" id="9E8N"/>
<dbReference type="PDBsum" id="9E8O"/>
<dbReference type="PDBsum" id="9E8Q"/>
<dbReference type="PDBsum" id="9HMN"/>
<dbReference type="EMDB" id="EMD-0781"/>
<dbReference type="EMDB" id="EMD-12341"/>
<dbReference type="EMDB" id="EMD-13389"/>
<dbReference type="EMDB" id="EMD-14201"/>
<dbReference type="EMDB" id="EMD-14202"/>
<dbReference type="EMDB" id="EMD-14203"/>
<dbReference type="EMDB" id="EMD-14204"/>
<dbReference type="EMDB" id="EMD-14205"/>
<dbReference type="EMDB" id="EMD-14209"/>
<dbReference type="EMDB" id="EMD-14210"/>
<dbReference type="EMDB" id="EMD-14211"/>
<dbReference type="EMDB" id="EMD-18755"/>
<dbReference type="EMDB" id="EMD-18757"/>
<dbReference type="EMDB" id="EMD-18758"/>
<dbReference type="EMDB" id="EMD-18759"/>
<dbReference type="EMDB" id="EMD-18760"/>
<dbReference type="EMDB" id="EMD-18761"/>
<dbReference type="EMDB" id="EMD-18773"/>
<dbReference type="EMDB" id="EMD-21691"/>
<dbReference type="EMDB" id="EMD-21696"/>
<dbReference type="EMDB" id="EMD-22259"/>
<dbReference type="EMDB" id="EMD-23576"/>
<dbReference type="EMDB" id="EMD-24275"/>
<dbReference type="EMDB" id="EMD-24276"/>
<dbReference type="EMDB" id="EMD-24277"/>
<dbReference type="EMDB" id="EMD-24278"/>
<dbReference type="EMDB" id="EMD-27013"/>
<dbReference type="EMDB" id="EMD-27015"/>
<dbReference type="EMDB" id="EMD-27018"/>
<dbReference type="EMDB" id="EMD-2981"/>
<dbReference type="EMDB" id="EMD-31724"/>
<dbReference type="EMDB" id="EMD-31727"/>
<dbReference type="EMDB" id="EMD-32272"/>
<dbReference type="EMDB" id="EMD-32273"/>
<dbReference type="EMDB" id="EMD-32274"/>
<dbReference type="EMDB" id="EMD-32275"/>
<dbReference type="EMDB" id="EMD-32276"/>
<dbReference type="EMDB" id="EMD-32277"/>
<dbReference type="EMDB" id="EMD-32278"/>
<dbReference type="EMDB" id="EMD-32279"/>
<dbReference type="EMDB" id="EMD-32280"/>
<dbReference type="EMDB" id="EMD-32281"/>
<dbReference type="EMDB" id="EMD-32282"/>
<dbReference type="EMDB" id="EMD-32283"/>
<dbReference type="EMDB" id="EMD-32284"/>
<dbReference type="EMDB" id="EMD-36598"/>
<dbReference type="EMDB" id="EMD-36605"/>
<dbReference type="EMDB" id="EMD-36645"/>
<dbReference type="EMDB" id="EMD-36764"/>
<dbReference type="EMDB" id="EMD-39332"/>
<dbReference type="EMDB" id="EMD-39333"/>
<dbReference type="EMDB" id="EMD-39334"/>
<dbReference type="EMDB" id="EMD-4089"/>
<dbReference type="EMDB" id="EMD-41377"/>
<dbReference type="EMDB" id="EMD-41378"/>
<dbReference type="EMDB" id="EMD-41379"/>
<dbReference type="EMDB" id="EMD-41380"/>
<dbReference type="EMDB" id="EMD-4146"/>
<dbReference type="EMDB" id="EMD-42148"/>
<dbReference type="EMDB" id="EMD-42506"/>
<dbReference type="EMDB" id="EMD-42507"/>
<dbReference type="EMDB" id="EMD-4738"/>
<dbReference type="EMDB" id="EMD-47719"/>
<dbReference type="EMDB" id="EMD-47720"/>
<dbReference type="EMDB" id="EMD-47721"/>
<dbReference type="EMDB" id="EMD-47722"/>
<dbReference type="EMDB" id="EMD-47723"/>
<dbReference type="EMDB" id="EMD-47724"/>
<dbReference type="EMDB" id="EMD-47725"/>
<dbReference type="EMDB" id="EMD-47726"/>
<dbReference type="EMDB" id="EMD-47727"/>
<dbReference type="EMDB" id="EMD-4860"/>
<dbReference type="EMDB" id="EMD-4877"/>
<dbReference type="EMDB" id="EMD-52296"/>
<dbReference type="EMDB" id="EMD-60138"/>
<dbReference type="EMDB" id="EMD-60139"/>
<dbReference type="EMDB" id="EMD-7010"/>
<dbReference type="EMDB" id="EMD-8662"/>
<dbReference type="EMDB" id="EMD-8663"/>
<dbReference type="EMDB" id="EMD-8664"/>
<dbReference type="EMDB" id="EMD-8665"/>
<dbReference type="EMDB" id="EMD-8666"/>
<dbReference type="EMDB" id="EMD-8667"/>
<dbReference type="EMDB" id="EMD-8668"/>
<dbReference type="EMDB" id="EMD-9216"/>
<dbReference type="EMDB" id="EMD-9217"/>
<dbReference type="EMDB" id="EMD-9218"/>
<dbReference type="EMDB" id="EMD-9219"/>
<dbReference type="EMDB" id="EMD-9220"/>
<dbReference type="EMDB" id="EMD-9221"/>
<dbReference type="EMDB" id="EMD-9222"/>
<dbReference type="EMDB" id="EMD-9511"/>
<dbReference type="EMDB" id="EMD-9512"/>
<dbReference type="SMR" id="P25786"/>
<dbReference type="BioGRID" id="111655">
    <property type="interactions" value="491"/>
</dbReference>
<dbReference type="ComplexPortal" id="CPX-5993">
    <property type="entry name" value="26S proteasome complex"/>
</dbReference>
<dbReference type="ComplexPortal" id="CPX-8806">
    <property type="entry name" value="20S proteasome complex"/>
</dbReference>
<dbReference type="ComplexPortal" id="CPX-8841">
    <property type="entry name" value="PA200-20S single-capped proteasome"/>
</dbReference>
<dbReference type="ComplexPortal" id="CPX-8842">
    <property type="entry name" value="PA28-alphabeta double-capped 20S proteasome complex"/>
</dbReference>
<dbReference type="ComplexPortal" id="CPX-9001">
    <property type="entry name" value="PA28-gamma single-capped 20S proteasome complex"/>
</dbReference>
<dbReference type="ComplexPortal" id="CPX-9002">
    <property type="entry name" value="PA28-alphabeta single-capped 20S proteasome complex"/>
</dbReference>
<dbReference type="ComplexPortal" id="CPX-9003">
    <property type="entry name" value="20S immunoproteasome complex"/>
</dbReference>
<dbReference type="ComplexPortal" id="CPX-9004">
    <property type="entry name" value="20S thymoproteasome complex"/>
</dbReference>
<dbReference type="ComplexPortal" id="CPX-9021">
    <property type="entry name" value="20S spermatoproteasome complex"/>
</dbReference>
<dbReference type="ComplexPortal" id="CPX-9022">
    <property type="entry name" value="PA28-gamma double-capped 20S proteasome complex"/>
</dbReference>
<dbReference type="ComplexPortal" id="CPX-9063">
    <property type="entry name" value="PA200-20S-PA200 double-capped proteasome complex"/>
</dbReference>
<dbReference type="ComplexPortal" id="CPX-9082">
    <property type="entry name" value="19S-20S-PA28-alphabeta hybrid proteasome complex"/>
</dbReference>
<dbReference type="ComplexPortal" id="CPX-9085">
    <property type="entry name" value="19S-20S-PA28-gamma hybrid proteasome complex"/>
</dbReference>
<dbReference type="ComplexPortal" id="CPX-9086">
    <property type="entry name" value="30S proteasome complex"/>
</dbReference>
<dbReference type="CORUM" id="P25786"/>
<dbReference type="DIP" id="DIP-29369N"/>
<dbReference type="FunCoup" id="P25786">
    <property type="interactions" value="2582"/>
</dbReference>
<dbReference type="IntAct" id="P25786">
    <property type="interactions" value="268"/>
</dbReference>
<dbReference type="MINT" id="P25786"/>
<dbReference type="STRING" id="9606.ENSP00000414359"/>
<dbReference type="BindingDB" id="P25786"/>
<dbReference type="ChEMBL" id="CHEMBL4879432"/>
<dbReference type="DrugBank" id="DB08515">
    <property type="generic name" value="(3AR,6R,6AS)-6-((S)-((S)-CYCLOHEX-2-ENYL)(HYDROXY)METHYL)-6A-METHYL-4-OXO-HEXAHYDRO-2H-FURO[3,2-C]PYRROLE-6-CARBALDEHYDE"/>
</dbReference>
<dbReference type="DrugCentral" id="P25786"/>
<dbReference type="MEROPS" id="T01.976"/>
<dbReference type="GlyCosmos" id="P25786">
    <property type="glycosylation" value="1 site, No reported glycans"/>
</dbReference>
<dbReference type="GlyGen" id="P25786">
    <property type="glycosylation" value="3 sites, 1 N-linked glycan (1 site), 1 O-linked glycan (1 site)"/>
</dbReference>
<dbReference type="iPTMnet" id="P25786"/>
<dbReference type="MetOSite" id="P25786"/>
<dbReference type="PhosphoSitePlus" id="P25786"/>
<dbReference type="SwissPalm" id="P25786"/>
<dbReference type="BioMuta" id="PSMA1"/>
<dbReference type="DMDM" id="130848"/>
<dbReference type="OGP" id="P25786"/>
<dbReference type="REPRODUCTION-2DPAGE" id="IPI00016832"/>
<dbReference type="CPTAC" id="CPTAC-5955"/>
<dbReference type="jPOST" id="P25786"/>
<dbReference type="MassIVE" id="P25786"/>
<dbReference type="PaxDb" id="9606-ENSP00000414359"/>
<dbReference type="PeptideAtlas" id="P25786"/>
<dbReference type="ProteomicsDB" id="54287">
    <molecule id="P25786-1"/>
</dbReference>
<dbReference type="ProteomicsDB" id="54288">
    <molecule id="P25786-2"/>
</dbReference>
<dbReference type="Pumba" id="P25786"/>
<dbReference type="TopDownProteomics" id="P25786-1">
    <molecule id="P25786-1"/>
</dbReference>
<dbReference type="Antibodypedia" id="11977">
    <property type="antibodies" value="375 antibodies from 40 providers"/>
</dbReference>
<dbReference type="CPTC" id="P25786">
    <property type="antibodies" value="1 antibody"/>
</dbReference>
<dbReference type="DNASU" id="5682"/>
<dbReference type="Ensembl" id="ENST00000396394.7">
    <molecule id="P25786-1"/>
    <property type="protein sequence ID" value="ENSP00000379676.2"/>
    <property type="gene ID" value="ENSG00000129084.19"/>
</dbReference>
<dbReference type="Ensembl" id="ENST00000418988.2">
    <molecule id="P25786-2"/>
    <property type="protein sequence ID" value="ENSP00000414359.2"/>
    <property type="gene ID" value="ENSG00000129084.19"/>
</dbReference>
<dbReference type="Ensembl" id="ENST00000718310.1">
    <molecule id="P25786-1"/>
    <property type="protein sequence ID" value="ENSP00000520747.1"/>
    <property type="gene ID" value="ENSG00000129084.19"/>
</dbReference>
<dbReference type="GeneID" id="5682"/>
<dbReference type="KEGG" id="hsa:5682"/>
<dbReference type="MANE-Select" id="ENST00000396394.7">
    <property type="protein sequence ID" value="ENSP00000379676.2"/>
    <property type="RefSeq nucleotide sequence ID" value="NM_002786.4"/>
    <property type="RefSeq protein sequence ID" value="NP_002777.1"/>
</dbReference>
<dbReference type="UCSC" id="uc001mlk.4">
    <molecule id="P25786-1"/>
    <property type="organism name" value="human"/>
</dbReference>
<dbReference type="AGR" id="HGNC:9530"/>
<dbReference type="CTD" id="5682"/>
<dbReference type="DisGeNET" id="5682"/>
<dbReference type="GeneCards" id="PSMA1"/>
<dbReference type="HGNC" id="HGNC:9530">
    <property type="gene designation" value="PSMA1"/>
</dbReference>
<dbReference type="HPA" id="ENSG00000129084">
    <property type="expression patterns" value="Low tissue specificity"/>
</dbReference>
<dbReference type="MIM" id="602854">
    <property type="type" value="gene"/>
</dbReference>
<dbReference type="neXtProt" id="NX_P25786"/>
<dbReference type="OpenTargets" id="ENSG00000129084"/>
<dbReference type="PharmGKB" id="PA33875"/>
<dbReference type="VEuPathDB" id="HostDB:ENSG00000129084"/>
<dbReference type="eggNOG" id="KOG0863">
    <property type="taxonomic scope" value="Eukaryota"/>
</dbReference>
<dbReference type="GeneTree" id="ENSGT00550000074855"/>
<dbReference type="HOGENOM" id="CLU_035750_8_0_1"/>
<dbReference type="InParanoid" id="P25786"/>
<dbReference type="OMA" id="NTQVYGK"/>
<dbReference type="OrthoDB" id="431557at2759"/>
<dbReference type="PAN-GO" id="P25786">
    <property type="GO annotations" value="4 GO annotations based on evolutionary models"/>
</dbReference>
<dbReference type="PhylomeDB" id="P25786"/>
<dbReference type="TreeFam" id="TF106206"/>
<dbReference type="PathwayCommons" id="P25786"/>
<dbReference type="Reactome" id="R-HSA-1169091">
    <property type="pathway name" value="Activation of NF-kappaB in B cells"/>
</dbReference>
<dbReference type="Reactome" id="R-HSA-1234176">
    <property type="pathway name" value="Oxygen-dependent proline hydroxylation of Hypoxia-inducible Factor Alpha"/>
</dbReference>
<dbReference type="Reactome" id="R-HSA-1236974">
    <property type="pathway name" value="ER-Phagosome pathway"/>
</dbReference>
<dbReference type="Reactome" id="R-HSA-1236978">
    <property type="pathway name" value="Cross-presentation of soluble exogenous antigens (endosomes)"/>
</dbReference>
<dbReference type="Reactome" id="R-HSA-174084">
    <property type="pathway name" value="Autodegradation of Cdh1 by Cdh1:APC/C"/>
</dbReference>
<dbReference type="Reactome" id="R-HSA-174113">
    <property type="pathway name" value="SCF-beta-TrCP mediated degradation of Emi1"/>
</dbReference>
<dbReference type="Reactome" id="R-HSA-174154">
    <property type="pathway name" value="APC/C:Cdc20 mediated degradation of Securin"/>
</dbReference>
<dbReference type="Reactome" id="R-HSA-174178">
    <property type="pathway name" value="APC/C:Cdh1 mediated degradation of Cdc20 and other APC/C:Cdh1 targeted proteins in late mitosis/early G1"/>
</dbReference>
<dbReference type="Reactome" id="R-HSA-174184">
    <property type="pathway name" value="Cdc20:Phospho-APC/C mediated degradation of Cyclin A"/>
</dbReference>
<dbReference type="Reactome" id="R-HSA-180534">
    <property type="pathway name" value="Vpu mediated degradation of CD4"/>
</dbReference>
<dbReference type="Reactome" id="R-HSA-180585">
    <property type="pathway name" value="Vif-mediated degradation of APOBEC3G"/>
</dbReference>
<dbReference type="Reactome" id="R-HSA-187577">
    <property type="pathway name" value="SCF(Skp2)-mediated degradation of p27/p21"/>
</dbReference>
<dbReference type="Reactome" id="R-HSA-195253">
    <property type="pathway name" value="Degradation of beta-catenin by the destruction complex"/>
</dbReference>
<dbReference type="Reactome" id="R-HSA-202424">
    <property type="pathway name" value="Downstream TCR signaling"/>
</dbReference>
<dbReference type="Reactome" id="R-HSA-211733">
    <property type="pathway name" value="Regulation of activated PAK-2p34 by proteasome mediated degradation"/>
</dbReference>
<dbReference type="Reactome" id="R-HSA-2467813">
    <property type="pathway name" value="Separation of Sister Chromatids"/>
</dbReference>
<dbReference type="Reactome" id="R-HSA-2871837">
    <property type="pathway name" value="FCERI mediated NF-kB activation"/>
</dbReference>
<dbReference type="Reactome" id="R-HSA-349425">
    <property type="pathway name" value="Autodegradation of the E3 ubiquitin ligase COP1"/>
</dbReference>
<dbReference type="Reactome" id="R-HSA-350562">
    <property type="pathway name" value="Regulation of ornithine decarboxylase (ODC)"/>
</dbReference>
<dbReference type="Reactome" id="R-HSA-382556">
    <property type="pathway name" value="ABC-family proteins mediated transport"/>
</dbReference>
<dbReference type="Reactome" id="R-HSA-450408">
    <property type="pathway name" value="AUF1 (hnRNP D0) binds and destabilizes mRNA"/>
</dbReference>
<dbReference type="Reactome" id="R-HSA-4608870">
    <property type="pathway name" value="Asymmetric localization of PCP proteins"/>
</dbReference>
<dbReference type="Reactome" id="R-HSA-4641257">
    <property type="pathway name" value="Degradation of AXIN"/>
</dbReference>
<dbReference type="Reactome" id="R-HSA-4641258">
    <property type="pathway name" value="Degradation of DVL"/>
</dbReference>
<dbReference type="Reactome" id="R-HSA-5358346">
    <property type="pathway name" value="Hedgehog ligand biogenesis"/>
</dbReference>
<dbReference type="Reactome" id="R-HSA-5362768">
    <property type="pathway name" value="Hh mutants are degraded by ERAD"/>
</dbReference>
<dbReference type="Reactome" id="R-HSA-5607761">
    <property type="pathway name" value="Dectin-1 mediated noncanonical NF-kB signaling"/>
</dbReference>
<dbReference type="Reactome" id="R-HSA-5607764">
    <property type="pathway name" value="CLEC7A (Dectin-1) signaling"/>
</dbReference>
<dbReference type="Reactome" id="R-HSA-5610780">
    <property type="pathway name" value="Degradation of GLI1 by the proteasome"/>
</dbReference>
<dbReference type="Reactome" id="R-HSA-5610783">
    <property type="pathway name" value="Degradation of GLI2 by the proteasome"/>
</dbReference>
<dbReference type="Reactome" id="R-HSA-5610785">
    <property type="pathway name" value="GLI3 is processed to GLI3R by the proteasome"/>
</dbReference>
<dbReference type="Reactome" id="R-HSA-5632684">
    <property type="pathway name" value="Hedgehog 'on' state"/>
</dbReference>
<dbReference type="Reactome" id="R-HSA-5658442">
    <property type="pathway name" value="Regulation of RAS by GAPs"/>
</dbReference>
<dbReference type="Reactome" id="R-HSA-5668541">
    <property type="pathway name" value="TNFR2 non-canonical NF-kB pathway"/>
</dbReference>
<dbReference type="Reactome" id="R-HSA-5676590">
    <property type="pathway name" value="NIK--&gt;noncanonical NF-kB signaling"/>
</dbReference>
<dbReference type="Reactome" id="R-HSA-5678895">
    <property type="pathway name" value="Defective CFTR causes cystic fibrosis"/>
</dbReference>
<dbReference type="Reactome" id="R-HSA-5687128">
    <property type="pathway name" value="MAPK6/MAPK4 signaling"/>
</dbReference>
<dbReference type="Reactome" id="R-HSA-5689603">
    <property type="pathway name" value="UCH proteinases"/>
</dbReference>
<dbReference type="Reactome" id="R-HSA-5689880">
    <property type="pathway name" value="Ub-specific processing proteases"/>
</dbReference>
<dbReference type="Reactome" id="R-HSA-68867">
    <property type="pathway name" value="Assembly of the pre-replicative complex"/>
</dbReference>
<dbReference type="Reactome" id="R-HSA-68949">
    <property type="pathway name" value="Orc1 removal from chromatin"/>
</dbReference>
<dbReference type="Reactome" id="R-HSA-69017">
    <property type="pathway name" value="CDK-mediated phosphorylation and removal of Cdc6"/>
</dbReference>
<dbReference type="Reactome" id="R-HSA-69481">
    <property type="pathway name" value="G2/M Checkpoints"/>
</dbReference>
<dbReference type="Reactome" id="R-HSA-69601">
    <property type="pathway name" value="Ubiquitin Mediated Degradation of Phosphorylated Cdc25A"/>
</dbReference>
<dbReference type="Reactome" id="R-HSA-75815">
    <property type="pathway name" value="Ubiquitin-dependent degradation of Cyclin D"/>
</dbReference>
<dbReference type="Reactome" id="R-HSA-8852276">
    <property type="pathway name" value="The role of GTSE1 in G2/M progression after G2 checkpoint"/>
</dbReference>
<dbReference type="Reactome" id="R-HSA-8854050">
    <property type="pathway name" value="FBXL7 down-regulates AURKA during mitotic entry and in early mitosis"/>
</dbReference>
<dbReference type="Reactome" id="R-HSA-8939236">
    <property type="pathway name" value="RUNX1 regulates transcription of genes involved in differentiation of HSCs"/>
</dbReference>
<dbReference type="Reactome" id="R-HSA-8939902">
    <property type="pathway name" value="Regulation of RUNX2 expression and activity"/>
</dbReference>
<dbReference type="Reactome" id="R-HSA-8941858">
    <property type="pathway name" value="Regulation of RUNX3 expression and activity"/>
</dbReference>
<dbReference type="Reactome" id="R-HSA-8948751">
    <property type="pathway name" value="Regulation of PTEN stability and activity"/>
</dbReference>
<dbReference type="Reactome" id="R-HSA-8951664">
    <property type="pathway name" value="Neddylation"/>
</dbReference>
<dbReference type="Reactome" id="R-HSA-9010553">
    <property type="pathway name" value="Regulation of expression of SLITs and ROBOs"/>
</dbReference>
<dbReference type="Reactome" id="R-HSA-9020702">
    <property type="pathway name" value="Interleukin-1 signaling"/>
</dbReference>
<dbReference type="Reactome" id="R-HSA-9604323">
    <property type="pathway name" value="Negative regulation of NOTCH4 signaling"/>
</dbReference>
<dbReference type="Reactome" id="R-HSA-9755511">
    <property type="pathway name" value="KEAP1-NFE2L2 pathway"/>
</dbReference>
<dbReference type="Reactome" id="R-HSA-9762114">
    <property type="pathway name" value="GSK3B and BTRC:CUL1-mediated-degradation of NFE2L2"/>
</dbReference>
<dbReference type="Reactome" id="R-HSA-9824272">
    <property type="pathway name" value="Somitogenesis"/>
</dbReference>
<dbReference type="Reactome" id="R-HSA-983168">
    <property type="pathway name" value="Antigen processing: Ubiquitination &amp; Proteasome degradation"/>
</dbReference>
<dbReference type="Reactome" id="R-HSA-9907900">
    <property type="pathway name" value="Proteasome assembly"/>
</dbReference>
<dbReference type="SignaLink" id="P25786"/>
<dbReference type="SIGNOR" id="P25786"/>
<dbReference type="BioGRID-ORCS" id="5682">
    <property type="hits" value="821 hits in 1164 CRISPR screens"/>
</dbReference>
<dbReference type="ChiTaRS" id="PSMA1">
    <property type="organism name" value="human"/>
</dbReference>
<dbReference type="EvolutionaryTrace" id="P25786"/>
<dbReference type="GeneWiki" id="Proteasome_(prosome,_macropain)_subunit,_alpha_1"/>
<dbReference type="GenomeRNAi" id="5682"/>
<dbReference type="Pharos" id="P25786">
    <property type="development level" value="Tclin"/>
</dbReference>
<dbReference type="PRO" id="PR:P25786"/>
<dbReference type="Proteomes" id="UP000005640">
    <property type="component" value="Chromosome 11"/>
</dbReference>
<dbReference type="RNAct" id="P25786">
    <property type="molecule type" value="protein"/>
</dbReference>
<dbReference type="Bgee" id="ENSG00000129084">
    <property type="expression patterns" value="Expressed in islet of Langerhans and 111 other cell types or tissues"/>
</dbReference>
<dbReference type="ExpressionAtlas" id="P25786">
    <property type="expression patterns" value="baseline and differential"/>
</dbReference>
<dbReference type="GO" id="GO:0005813">
    <property type="term" value="C:centrosome"/>
    <property type="evidence" value="ECO:0000314"/>
    <property type="project" value="HPA"/>
</dbReference>
<dbReference type="GO" id="GO:0005737">
    <property type="term" value="C:cytoplasm"/>
    <property type="evidence" value="ECO:0000314"/>
    <property type="project" value="UniProtKB"/>
</dbReference>
<dbReference type="GO" id="GO:0005829">
    <property type="term" value="C:cytosol"/>
    <property type="evidence" value="ECO:0000304"/>
    <property type="project" value="Reactome"/>
</dbReference>
<dbReference type="GO" id="GO:0070062">
    <property type="term" value="C:extracellular exosome"/>
    <property type="evidence" value="ECO:0007005"/>
    <property type="project" value="UniProtKB"/>
</dbReference>
<dbReference type="GO" id="GO:0005654">
    <property type="term" value="C:nucleoplasm"/>
    <property type="evidence" value="ECO:0000314"/>
    <property type="project" value="HPA"/>
</dbReference>
<dbReference type="GO" id="GO:0005634">
    <property type="term" value="C:nucleus"/>
    <property type="evidence" value="ECO:0000314"/>
    <property type="project" value="UniProtKB"/>
</dbReference>
<dbReference type="GO" id="GO:0000502">
    <property type="term" value="C:proteasome complex"/>
    <property type="evidence" value="ECO:0000314"/>
    <property type="project" value="UniProtKB"/>
</dbReference>
<dbReference type="GO" id="GO:0005839">
    <property type="term" value="C:proteasome core complex"/>
    <property type="evidence" value="ECO:0000314"/>
    <property type="project" value="UniProtKB"/>
</dbReference>
<dbReference type="GO" id="GO:0019773">
    <property type="term" value="C:proteasome core complex, alpha-subunit complex"/>
    <property type="evidence" value="ECO:0000250"/>
    <property type="project" value="UniProtKB"/>
</dbReference>
<dbReference type="GO" id="GO:0001530">
    <property type="term" value="F:lipopolysaccharide binding"/>
    <property type="evidence" value="ECO:0007669"/>
    <property type="project" value="Ensembl"/>
</dbReference>
<dbReference type="GO" id="GO:0002376">
    <property type="term" value="P:immune system process"/>
    <property type="evidence" value="ECO:0007669"/>
    <property type="project" value="UniProtKB-KW"/>
</dbReference>
<dbReference type="GO" id="GO:0002862">
    <property type="term" value="P:negative regulation of inflammatory response to antigenic stimulus"/>
    <property type="evidence" value="ECO:0007669"/>
    <property type="project" value="Ensembl"/>
</dbReference>
<dbReference type="GO" id="GO:0043161">
    <property type="term" value="P:proteasome-mediated ubiquitin-dependent protein catabolic process"/>
    <property type="evidence" value="ECO:0000318"/>
    <property type="project" value="GO_Central"/>
</dbReference>
<dbReference type="CDD" id="cd03749">
    <property type="entry name" value="proteasome_alpha_type_1"/>
    <property type="match status" value="1"/>
</dbReference>
<dbReference type="FunFam" id="3.60.20.10:FF:000025">
    <property type="entry name" value="Proteasome subunit alpha type"/>
    <property type="match status" value="1"/>
</dbReference>
<dbReference type="Gene3D" id="3.60.20.10">
    <property type="entry name" value="Glutamine Phosphoribosylpyrophosphate, subunit 1, domain 1"/>
    <property type="match status" value="1"/>
</dbReference>
<dbReference type="InterPro" id="IPR029055">
    <property type="entry name" value="Ntn_hydrolases_N"/>
</dbReference>
<dbReference type="InterPro" id="IPR050115">
    <property type="entry name" value="Proteasome_alpha"/>
</dbReference>
<dbReference type="InterPro" id="IPR023332">
    <property type="entry name" value="Proteasome_alpha-type"/>
</dbReference>
<dbReference type="InterPro" id="IPR035144">
    <property type="entry name" value="Proteasome_alpha1"/>
</dbReference>
<dbReference type="InterPro" id="IPR000426">
    <property type="entry name" value="Proteasome_asu_N"/>
</dbReference>
<dbReference type="InterPro" id="IPR001353">
    <property type="entry name" value="Proteasome_sua/b"/>
</dbReference>
<dbReference type="PANTHER" id="PTHR11599">
    <property type="entry name" value="PROTEASOME SUBUNIT ALPHA/BETA"/>
    <property type="match status" value="1"/>
</dbReference>
<dbReference type="Pfam" id="PF00227">
    <property type="entry name" value="Proteasome"/>
    <property type="match status" value="1"/>
</dbReference>
<dbReference type="Pfam" id="PF10584">
    <property type="entry name" value="Proteasome_A_N"/>
    <property type="match status" value="1"/>
</dbReference>
<dbReference type="SMART" id="SM00948">
    <property type="entry name" value="Proteasome_A_N"/>
    <property type="match status" value="1"/>
</dbReference>
<dbReference type="SUPFAM" id="SSF56235">
    <property type="entry name" value="N-terminal nucleophile aminohydrolases (Ntn hydrolases)"/>
    <property type="match status" value="1"/>
</dbReference>
<dbReference type="PROSITE" id="PS00388">
    <property type="entry name" value="PROTEASOME_ALPHA_1"/>
    <property type="match status" value="1"/>
</dbReference>
<dbReference type="PROSITE" id="PS51475">
    <property type="entry name" value="PROTEASOME_ALPHA_2"/>
    <property type="match status" value="1"/>
</dbReference>
<comment type="function">
    <text evidence="6 14 20">Component of the 20S core proteasome complex involved in the proteolytic degradation of most intracellular proteins. This complex plays numerous essential roles within the cell by associating with different regulatory particles. Associated with two 19S regulatory particles, forms the 26S proteasome and thus participates in the ATP-dependent degradation of ubiquitinated proteins. The 26S proteasome plays a key role in the maintenance of protein homeostasis by removing misfolded or damaged proteins that could impair cellular functions, and by removing proteins whose functions are no longer required. Associated with the PA200 or PA28, the 20S proteasome mediates ubiquitin-independent protein degradation. This type of proteolysis is required in several pathways including spermatogenesis (20S-PA200 complex) or generation of a subset of MHC class I-presented antigenic peptides (20S-PA28 complex).</text>
</comment>
<comment type="subunit">
    <text evidence="11 12 13 15 16 17 18 19">The 26S proteasome consists of a 20S proteasome core and two 19S regulatory subunits (PubMed:25599644, PubMed:26133119, PubMed:27342858, PubMed:27428775, PubMed:27493187, PubMed:34711951). The 20S proteasome core is a barrel-shaped complex made of 28 subunits that are arranged in four stacked rings (PubMed:25599644, PubMed:26133119, PubMed:27342858, PubMed:27428775, PubMed:27493187). The two outer rings are each formed by seven alpha subunits, and the two inner rings are formed by seven beta subunits (PubMed:25599644, PubMed:26133119, PubMed:27342858, PubMed:27428775, PubMed:27493187). The proteolytic activity is exerted by three beta-subunits PSMB5, PSMB6 and PSMB7 (PubMed:25599644, PubMed:26133119, PubMed:27342858, PubMed:27428775, PubMed:27493187). Interacts with NOTCH3 (PubMed:17292860). Interacts with ZFAND1 (PubMed:29804830).</text>
</comment>
<comment type="interaction">
    <interactant intactId="EBI-359352">
        <id>P25786</id>
    </interactant>
    <interactant intactId="EBI-11096309">
        <id>Q9NYB9-2</id>
        <label>ABI2</label>
    </interactant>
    <organismsDiffer>false</organismsDiffer>
    <experiments>3</experiments>
</comment>
<comment type="interaction">
    <interactant intactId="EBI-359352">
        <id>P25786</id>
    </interactant>
    <interactant intactId="EBI-742038">
        <id>Q9P2A4</id>
        <label>ABI3</label>
    </interactant>
    <organismsDiffer>false</organismsDiffer>
    <experiments>3</experiments>
</comment>
<comment type="interaction">
    <interactant intactId="EBI-359352">
        <id>P25786</id>
    </interactant>
    <interactant intactId="EBI-77797">
        <id>P35609</id>
        <label>ACTN2</label>
    </interactant>
    <organismsDiffer>false</organismsDiffer>
    <experiments>3</experiments>
</comment>
<comment type="interaction">
    <interactant intactId="EBI-359352">
        <id>P25786</id>
    </interactant>
    <interactant intactId="EBI-712648">
        <id>O95994</id>
        <label>AGR2</label>
    </interactant>
    <organismsDiffer>false</organismsDiffer>
    <experiments>3</experiments>
</comment>
<comment type="interaction">
    <interactant intactId="EBI-359352">
        <id>P25786</id>
    </interactant>
    <interactant intactId="EBI-359248">
        <id>Q96GX9</id>
        <label>APIP</label>
    </interactant>
    <organismsDiffer>false</organismsDiffer>
    <experiments>3</experiments>
</comment>
<comment type="interaction">
    <interactant intactId="EBI-359352">
        <id>P25786</id>
    </interactant>
    <interactant intactId="EBI-930964">
        <id>P54253</id>
        <label>ATXN1</label>
    </interactant>
    <organismsDiffer>false</organismsDiffer>
    <experiments>3</experiments>
</comment>
<comment type="interaction">
    <interactant intactId="EBI-359352">
        <id>P25786</id>
    </interactant>
    <interactant intactId="EBI-11977289">
        <id>Q9H503-2</id>
        <label>BANF2</label>
    </interactant>
    <organismsDiffer>false</organismsDiffer>
    <experiments>6</experiments>
</comment>
<comment type="interaction">
    <interactant intactId="EBI-359352">
        <id>P25786</id>
    </interactant>
    <interactant intactId="EBI-2548012">
        <id>Q9H2G9</id>
        <label>BLZF1</label>
    </interactant>
    <organismsDiffer>false</organismsDiffer>
    <experiments>3</experiments>
</comment>
<comment type="interaction">
    <interactant intactId="EBI-359352">
        <id>P25786</id>
    </interactant>
    <interactant intactId="EBI-7317823">
        <id>Q6P5X5</id>
        <label>C22orf39</label>
    </interactant>
    <organismsDiffer>false</organismsDiffer>
    <experiments>3</experiments>
</comment>
<comment type="interaction">
    <interactant intactId="EBI-359352">
        <id>P25786</id>
    </interactant>
    <interactant intactId="EBI-10311131">
        <id>Q9NP86</id>
        <label>CABP5</label>
    </interactant>
    <organismsDiffer>false</organismsDiffer>
    <experiments>3</experiments>
</comment>
<comment type="interaction">
    <interactant intactId="EBI-359352">
        <id>P25786</id>
    </interactant>
    <interactant intactId="EBI-739580">
        <id>Q13137</id>
        <label>CALCOCO2</label>
    </interactant>
    <organismsDiffer>false</organismsDiffer>
    <experiments>4</experiments>
</comment>
<comment type="interaction">
    <interactant intactId="EBI-359352">
        <id>P25786</id>
    </interactant>
    <interactant intactId="EBI-740135">
        <id>P35520</id>
        <label>CBS</label>
    </interactant>
    <organismsDiffer>false</organismsDiffer>
    <experiments>4</experiments>
</comment>
<comment type="interaction">
    <interactant intactId="EBI-359352">
        <id>P25786</id>
    </interactant>
    <interactant intactId="EBI-10171570">
        <id>Q68D86</id>
        <label>CCDC102B</label>
    </interactant>
    <organismsDiffer>false</organismsDiffer>
    <experiments>6</experiments>
</comment>
<comment type="interaction">
    <interactant intactId="EBI-359352">
        <id>P25786</id>
    </interactant>
    <interactant intactId="EBI-741406">
        <id>P51946</id>
        <label>CCNH</label>
    </interactant>
    <organismsDiffer>false</organismsDiffer>
    <experiments>9</experiments>
</comment>
<comment type="interaction">
    <interactant intactId="EBI-359352">
        <id>P25786</id>
    </interactant>
    <interactant intactId="EBI-9250559">
        <id>P32320</id>
        <label>CDA</label>
    </interactant>
    <organismsDiffer>false</organismsDiffer>
    <experiments>3</experiments>
</comment>
<comment type="interaction">
    <interactant intactId="EBI-359352">
        <id>P25786</id>
    </interactant>
    <interactant intactId="EBI-745859">
        <id>P55273</id>
        <label>CDKN2D</label>
    </interactant>
    <organismsDiffer>false</organismsDiffer>
    <experiments>3</experiments>
</comment>
<comment type="interaction">
    <interactant intactId="EBI-359352">
        <id>P25786</id>
    </interactant>
    <interactant intactId="EBI-1181367">
        <id>Q01850</id>
        <label>CDR2</label>
    </interactant>
    <organismsDiffer>false</organismsDiffer>
    <experiments>3</experiments>
</comment>
<comment type="interaction">
    <interactant intactId="EBI-359352">
        <id>P25786</id>
    </interactant>
    <interactant intactId="EBI-739624">
        <id>Q8NHQ1</id>
        <label>CEP70</label>
    </interactant>
    <organismsDiffer>false</organismsDiffer>
    <experiments>6</experiments>
</comment>
<comment type="interaction">
    <interactant intactId="EBI-359352">
        <id>P25786</id>
    </interactant>
    <interactant intactId="EBI-739498">
        <id>Q9P209</id>
        <label>CEP72</label>
    </interactant>
    <organismsDiffer>false</organismsDiffer>
    <experiments>5</experiments>
</comment>
<comment type="interaction">
    <interactant intactId="EBI-359352">
        <id>P25786</id>
    </interactant>
    <interactant intactId="EBI-749051">
        <id>Q8IYR0</id>
        <label>CFAP206</label>
    </interactant>
    <organismsDiffer>false</organismsDiffer>
    <experiments>3</experiments>
</comment>
<comment type="interaction">
    <interactant intactId="EBI-359352">
        <id>P25786</id>
    </interactant>
    <interactant intactId="EBI-1057156">
        <id>Q9HD42</id>
        <label>CHMP1A</label>
    </interactant>
    <organismsDiffer>false</organismsDiffer>
    <experiments>3</experiments>
</comment>
<comment type="interaction">
    <interactant intactId="EBI-359352">
        <id>P25786</id>
    </interactant>
    <interactant intactId="EBI-739784">
        <id>Q9BW66</id>
        <label>CINP</label>
    </interactant>
    <organismsDiffer>false</organismsDiffer>
    <experiments>3</experiments>
</comment>
<comment type="interaction">
    <interactant intactId="EBI-359352">
        <id>P25786</id>
    </interactant>
    <interactant intactId="EBI-368382">
        <id>Q9H9E3</id>
        <label>COG4</label>
    </interactant>
    <organismsDiffer>false</organismsDiffer>
    <experiments>3</experiments>
</comment>
<comment type="interaction">
    <interactant intactId="EBI-359352">
        <id>P25786</id>
    </interactant>
    <interactant intactId="EBI-3866319">
        <id>Q9Y2V7</id>
        <label>COG6</label>
    </interactant>
    <organismsDiffer>false</organismsDiffer>
    <experiments>3</experiments>
</comment>
<comment type="interaction">
    <interactant intactId="EBI-359352">
        <id>P25786</id>
    </interactant>
    <interactant intactId="EBI-748171">
        <id>O43186</id>
        <label>CRX</label>
    </interactant>
    <organismsDiffer>false</organismsDiffer>
    <experiments>3</experiments>
</comment>
<comment type="interaction">
    <interactant intactId="EBI-359352">
        <id>P25786</id>
    </interactant>
    <interactant intactId="EBI-739870">
        <id>P32321</id>
        <label>DCTD</label>
    </interactant>
    <organismsDiffer>false</organismsDiffer>
    <experiments>3</experiments>
</comment>
<comment type="interaction">
    <interactant intactId="EBI-359352">
        <id>P25786</id>
    </interactant>
    <interactant intactId="EBI-723569">
        <id>Q9H773</id>
        <label>DCTPP1</label>
    </interactant>
    <organismsDiffer>false</organismsDiffer>
    <experiments>3</experiments>
</comment>
<comment type="interaction">
    <interactant intactId="EBI-359352">
        <id>P25786</id>
    </interactant>
    <interactant intactId="EBI-742054">
        <id>Q96D03</id>
        <label>DDIT4L</label>
    </interactant>
    <organismsDiffer>false</organismsDiffer>
    <experiments>3</experiments>
</comment>
<comment type="interaction">
    <interactant intactId="EBI-359352">
        <id>P25786</id>
    </interactant>
    <interactant intactId="EBI-745369">
        <id>Q9H4E7</id>
        <label>DEF6</label>
    </interactant>
    <organismsDiffer>false</organismsDiffer>
    <experiments>3</experiments>
</comment>
<comment type="interaction">
    <interactant intactId="EBI-359352">
        <id>P25786</id>
    </interactant>
    <interactant intactId="EBI-11974185">
        <id>Q494R4-2</id>
        <label>DRC12</label>
    </interactant>
    <organismsDiffer>false</organismsDiffer>
    <experiments>3</experiments>
</comment>
<comment type="interaction">
    <interactant intactId="EBI-359352">
        <id>P25786</id>
    </interactant>
    <interactant intactId="EBI-740680">
        <id>Q8WWB3</id>
        <label>DYDC1</label>
    </interactant>
    <organismsDiffer>false</organismsDiffer>
    <experiments>3</experiments>
</comment>
<comment type="interaction">
    <interactant intactId="EBI-359352">
        <id>P25786</id>
    </interactant>
    <interactant intactId="EBI-1176455">
        <id>P63172</id>
        <label>DYNLT1</label>
    </interactant>
    <organismsDiffer>false</organismsDiffer>
    <experiments>3</experiments>
</comment>
<comment type="interaction">
    <interactant intactId="EBI-359352">
        <id>P25786</id>
    </interactant>
    <interactant intactId="EBI-10174566">
        <id>A2ABF9</id>
        <label>EHMT2</label>
    </interactant>
    <organismsDiffer>false</organismsDiffer>
    <experiments>3</experiments>
</comment>
<comment type="interaction">
    <interactant intactId="EBI-359352">
        <id>P25786</id>
    </interactant>
    <interactant intactId="EBI-299104">
        <id>P38919</id>
        <label>EIF4A3</label>
    </interactant>
    <organismsDiffer>false</organismsDiffer>
    <experiments>3</experiments>
</comment>
<comment type="interaction">
    <interactant intactId="EBI-359352">
        <id>P25786</id>
    </interactant>
    <interactant intactId="EBI-11989522">
        <id>Q7Z589-5</id>
        <label>EMSY</label>
    </interactant>
    <organismsDiffer>false</organismsDiffer>
    <experiments>3</experiments>
</comment>
<comment type="interaction">
    <interactant intactId="EBI-359352">
        <id>P25786</id>
    </interactant>
    <interactant intactId="EBI-744935">
        <id>Q9BVV2</id>
        <label>FNDC11</label>
    </interactant>
    <organismsDiffer>false</organismsDiffer>
    <experiments>5</experiments>
</comment>
<comment type="interaction">
    <interactant intactId="EBI-359352">
        <id>P25786</id>
    </interactant>
    <interactant intactId="EBI-1104907">
        <id>Q3T906</id>
        <label>GNPTAB</label>
    </interactant>
    <organismsDiffer>false</organismsDiffer>
    <experiments>3</experiments>
</comment>
<comment type="interaction">
    <interactant intactId="EBI-359352">
        <id>P25786</id>
    </interactant>
    <interactant intactId="EBI-618309">
        <id>Q08379</id>
        <label>GOLGA2</label>
    </interactant>
    <organismsDiffer>false</organismsDiffer>
    <experiments>6</experiments>
</comment>
<comment type="interaction">
    <interactant intactId="EBI-359352">
        <id>P25786</id>
    </interactant>
    <interactant intactId="EBI-11163335">
        <id>Q9NYA3</id>
        <label>GOLGA6A</label>
    </interactant>
    <organismsDiffer>false</organismsDiffer>
    <experiments>3</experiments>
</comment>
<comment type="interaction">
    <interactant intactId="EBI-359352">
        <id>P25786</id>
    </interactant>
    <interactant intactId="EBI-11043087">
        <id>Q9NQX3-2</id>
        <label>GPHN</label>
    </interactant>
    <organismsDiffer>false</organismsDiffer>
    <experiments>3</experiments>
</comment>
<comment type="interaction">
    <interactant intactId="EBI-359352">
        <id>P25786</id>
    </interactant>
    <interactant intactId="EBI-2798865">
        <id>P57764</id>
        <label>GSDMD</label>
    </interactant>
    <organismsDiffer>false</organismsDiffer>
    <experiments>3</experiments>
</comment>
<comment type="interaction">
    <interactant intactId="EBI-359352">
        <id>P25786</id>
    </interactant>
    <interactant intactId="EBI-11978177">
        <id>Q96NT3-2</id>
        <label>GUCD1</label>
    </interactant>
    <organismsDiffer>false</organismsDiffer>
    <experiments>3</experiments>
</comment>
<comment type="interaction">
    <interactant intactId="EBI-359352">
        <id>P25786</id>
    </interactant>
    <interactant intactId="EBI-5460660">
        <id>Q96MH2</id>
        <label>HEXIM2</label>
    </interactant>
    <organismsDiffer>false</organismsDiffer>
    <experiments>3</experiments>
</comment>
<comment type="interaction">
    <interactant intactId="EBI-359352">
        <id>P25786</id>
    </interactant>
    <interactant intactId="EBI-748420">
        <id>Q9NSC5</id>
        <label>HOMER3</label>
    </interactant>
    <organismsDiffer>false</organismsDiffer>
    <experiments>11</experiments>
</comment>
<comment type="interaction">
    <interactant intactId="EBI-359352">
        <id>P25786</id>
    </interactant>
    <interactant intactId="EBI-10961706">
        <id>Q96ED9-2</id>
        <label>HOOK2</label>
    </interactant>
    <organismsDiffer>false</organismsDiffer>
    <experiments>3</experiments>
</comment>
<comment type="interaction">
    <interactant intactId="EBI-359352">
        <id>P25786</id>
    </interactant>
    <interactant intactId="EBI-2652631">
        <id>O43248</id>
        <label>HOXC11</label>
    </interactant>
    <organismsDiffer>false</organismsDiffer>
    <experiments>3</experiments>
</comment>
<comment type="interaction">
    <interactant intactId="EBI-359352">
        <id>P25786</id>
    </interactant>
    <interactant intactId="EBI-742664">
        <id>Q9BPX1</id>
        <label>HSD17B14</label>
    </interactant>
    <organismsDiffer>false</organismsDiffer>
    <experiments>3</experiments>
</comment>
<comment type="interaction">
    <interactant intactId="EBI-359352">
        <id>P25786</id>
    </interactant>
    <interactant intactId="EBI-7116203">
        <id>O75031</id>
        <label>HSF2BP</label>
    </interactant>
    <organismsDiffer>false</organismsDiffer>
    <experiments>3</experiments>
</comment>
<comment type="interaction">
    <interactant intactId="EBI-359352">
        <id>P25786</id>
    </interactant>
    <interactant intactId="EBI-466029">
        <id>P42858</id>
        <label>HTT</label>
    </interactant>
    <organismsDiffer>false</organismsDiffer>
    <experiments>3</experiments>
</comment>
<comment type="interaction">
    <interactant intactId="EBI-359352">
        <id>P25786</id>
    </interactant>
    <interactant intactId="EBI-744203">
        <id>Q8IY31</id>
        <label>IFT20</label>
    </interactant>
    <organismsDiffer>false</organismsDiffer>
    <experiments>3</experiments>
</comment>
<comment type="interaction">
    <interactant intactId="EBI-359352">
        <id>P25786</id>
    </interactant>
    <interactant intactId="EBI-745305">
        <id>Q13422</id>
        <label>IKZF1</label>
    </interactant>
    <organismsDiffer>false</organismsDiffer>
    <experiments>3</experiments>
</comment>
<comment type="interaction">
    <interactant intactId="EBI-359352">
        <id>P25786</id>
    </interactant>
    <interactant intactId="EBI-747204">
        <id>Q9UKT9</id>
        <label>IKZF3</label>
    </interactant>
    <organismsDiffer>false</organismsDiffer>
    <experiments>3</experiments>
</comment>
<comment type="interaction">
    <interactant intactId="EBI-359352">
        <id>P25786</id>
    </interactant>
    <interactant intactId="EBI-769401">
        <id>Q8NBZ0</id>
        <label>INO80E</label>
    </interactant>
    <organismsDiffer>false</organismsDiffer>
    <experiments>3</experiments>
</comment>
<comment type="interaction">
    <interactant intactId="EBI-359352">
        <id>P25786</id>
    </interactant>
    <interactant intactId="EBI-747310">
        <id>O94829</id>
        <label>IPO13</label>
    </interactant>
    <organismsDiffer>false</organismsDiffer>
    <experiments>3</experiments>
</comment>
<comment type="interaction">
    <interactant intactId="EBI-359352">
        <id>P25786</id>
    </interactant>
    <interactant intactId="EBI-12024294">
        <id>Q674X7-2</id>
        <label>KAZN</label>
    </interactant>
    <organismsDiffer>false</organismsDiffer>
    <experiments>6</experiments>
</comment>
<comment type="interaction">
    <interactant intactId="EBI-359352">
        <id>P25786</id>
    </interactant>
    <interactant intactId="EBI-9027502">
        <id>Q719H9</id>
        <label>KCTD1</label>
    </interactant>
    <organismsDiffer>false</organismsDiffer>
    <experiments>3</experiments>
</comment>
<comment type="interaction">
    <interactant intactId="EBI-359352">
        <id>P25786</id>
    </interactant>
    <interactant intactId="EBI-742916">
        <id>Q8WZ19</id>
        <label>KCTD13</label>
    </interactant>
    <organismsDiffer>false</organismsDiffer>
    <experiments>3</experiments>
</comment>
<comment type="interaction">
    <interactant intactId="EBI-359352">
        <id>P25786</id>
    </interactant>
    <interactant intactId="EBI-2511344">
        <id>Q8NC69</id>
        <label>KCTD6</label>
    </interactant>
    <organismsDiffer>false</organismsDiffer>
    <experiments>6</experiments>
</comment>
<comment type="interaction">
    <interactant intactId="EBI-359352">
        <id>P25786</id>
    </interactant>
    <interactant intactId="EBI-11954971">
        <id>Q96MP8-2</id>
        <label>KCTD7</label>
    </interactant>
    <organismsDiffer>false</organismsDiffer>
    <experiments>3</experiments>
</comment>
<comment type="interaction">
    <interactant intactId="EBI-359352">
        <id>P25786</id>
    </interactant>
    <interactant intactId="EBI-4397613">
        <id>Q7L273</id>
        <label>KCTD9</label>
    </interactant>
    <organismsDiffer>false</organismsDiffer>
    <experiments>6</experiments>
</comment>
<comment type="interaction">
    <interactant intactId="EBI-359352">
        <id>P25786</id>
    </interactant>
    <interactant intactId="EBI-722504">
        <id>O75525</id>
        <label>KHDRBS3</label>
    </interactant>
    <organismsDiffer>false</organismsDiffer>
    <experiments>3</experiments>
</comment>
<comment type="interaction">
    <interactant intactId="EBI-359352">
        <id>P25786</id>
    </interactant>
    <interactant intactId="EBI-1223876">
        <id>P13646</id>
        <label>KRT13</label>
    </interactant>
    <organismsDiffer>false</organismsDiffer>
    <experiments>3</experiments>
</comment>
<comment type="interaction">
    <interactant intactId="EBI-359352">
        <id>P25786</id>
    </interactant>
    <interactant intactId="EBI-739566">
        <id>P19012</id>
        <label>KRT15</label>
    </interactant>
    <organismsDiffer>false</organismsDiffer>
    <experiments>4</experiments>
</comment>
<comment type="interaction">
    <interactant intactId="EBI-359352">
        <id>P25786</id>
    </interactant>
    <interactant intactId="EBI-742756">
        <id>P08727</id>
        <label>KRT19</label>
    </interactant>
    <organismsDiffer>false</organismsDiffer>
    <experiments>3</experiments>
</comment>
<comment type="interaction">
    <interactant intactId="EBI-359352">
        <id>P25786</id>
    </interactant>
    <interactant intactId="EBI-948001">
        <id>Q15323</id>
        <label>KRT31</label>
    </interactant>
    <organismsDiffer>false</organismsDiffer>
    <experiments>3</experiments>
</comment>
<comment type="interaction">
    <interactant intactId="EBI-359352">
        <id>P25786</id>
    </interactant>
    <interactant intactId="EBI-1047093">
        <id>O76011</id>
        <label>KRT34</label>
    </interactant>
    <organismsDiffer>false</organismsDiffer>
    <experiments>3</experiments>
</comment>
<comment type="interaction">
    <interactant intactId="EBI-359352">
        <id>P25786</id>
    </interactant>
    <interactant intactId="EBI-1045716">
        <id>O76014</id>
        <label>KRT37</label>
    </interactant>
    <organismsDiffer>false</organismsDiffer>
    <experiments>3</experiments>
</comment>
<comment type="interaction">
    <interactant intactId="EBI-359352">
        <id>P25786</id>
    </interactant>
    <interactant intactId="EBI-1047263">
        <id>O76015</id>
        <label>KRT38</label>
    </interactant>
    <organismsDiffer>false</organismsDiffer>
    <experiments>6</experiments>
</comment>
<comment type="interaction">
    <interactant intactId="EBI-359352">
        <id>P25786</id>
    </interactant>
    <interactant intactId="EBI-10171697">
        <id>Q6A162</id>
        <label>KRT40</label>
    </interactant>
    <organismsDiffer>false</organismsDiffer>
    <experiments>3</experiments>
</comment>
<comment type="interaction">
    <interactant intactId="EBI-359352">
        <id>P25786</id>
    </interactant>
    <interactant intactId="EBI-11959885">
        <id>Q07627</id>
        <label>KRTAP1-1</label>
    </interactant>
    <organismsDiffer>false</organismsDiffer>
    <experiments>3</experiments>
</comment>
<comment type="interaction">
    <interactant intactId="EBI-359352">
        <id>P25786</id>
    </interactant>
    <interactant intactId="EBI-11749135">
        <id>Q8IUG1</id>
        <label>KRTAP1-3</label>
    </interactant>
    <organismsDiffer>false</organismsDiffer>
    <experiments>3</experiments>
</comment>
<comment type="interaction">
    <interactant intactId="EBI-359352">
        <id>P25786</id>
    </interactant>
    <interactant intactId="EBI-34579671">
        <id>Q9BYQ7</id>
        <label>KRTAP4-1</label>
    </interactant>
    <organismsDiffer>false</organismsDiffer>
    <experiments>3</experiments>
</comment>
<comment type="interaction">
    <interactant intactId="EBI-359352">
        <id>P25786</id>
    </interactant>
    <interactant intactId="EBI-3958099">
        <id>P26371</id>
        <label>KRTAP5-9</label>
    </interactant>
    <organismsDiffer>false</organismsDiffer>
    <experiments>6</experiments>
</comment>
<comment type="interaction">
    <interactant intactId="EBI-359352">
        <id>P25786</id>
    </interactant>
    <interactant intactId="EBI-22311199">
        <id>Q3LI67</id>
        <label>KRTAP6-3</label>
    </interactant>
    <organismsDiffer>false</organismsDiffer>
    <experiments>3</experiments>
</comment>
<comment type="interaction">
    <interactant intactId="EBI-359352">
        <id>P25786</id>
    </interactant>
    <interactant intactId="EBI-740738">
        <id>O95751</id>
        <label>LDOC1</label>
    </interactant>
    <organismsDiffer>false</organismsDiffer>
    <experiments>8</experiments>
</comment>
<comment type="interaction">
    <interactant intactId="EBI-359352">
        <id>P25786</id>
    </interactant>
    <interactant intactId="EBI-11959475">
        <id>P25791-3</id>
        <label>LMO2</label>
    </interactant>
    <organismsDiffer>false</organismsDiffer>
    <experiments>3</experiments>
</comment>
<comment type="interaction">
    <interactant intactId="EBI-359352">
        <id>P25786</id>
    </interactant>
    <interactant intactId="EBI-2341787">
        <id>Q17RB8</id>
        <label>LONRF1</label>
    </interactant>
    <organismsDiffer>false</organismsDiffer>
    <experiments>3</experiments>
</comment>
<comment type="interaction">
    <interactant intactId="EBI-359352">
        <id>P25786</id>
    </interactant>
    <interactant intactId="EBI-2824799">
        <id>Q9NQ48</id>
        <label>LZTFL1</label>
    </interactant>
    <organismsDiffer>false</organismsDiffer>
    <experiments>3</experiments>
</comment>
<comment type="interaction">
    <interactant intactId="EBI-359352">
        <id>P25786</id>
    </interactant>
    <interactant intactId="EBI-1216080">
        <id>Q9Y250</id>
        <label>LZTS1</label>
    </interactant>
    <organismsDiffer>false</organismsDiffer>
    <experiments>3</experiments>
</comment>
<comment type="interaction">
    <interactant intactId="EBI-359352">
        <id>P25786</id>
    </interactant>
    <interactant intactId="EBI-741037">
        <id>Q9BRK4</id>
        <label>LZTS2</label>
    </interactant>
    <organismsDiffer>false</organismsDiffer>
    <experiments>3</experiments>
</comment>
<comment type="interaction">
    <interactant intactId="EBI-359352">
        <id>P25786</id>
    </interactant>
    <interactant intactId="EBI-742610">
        <id>Q9Y6D9</id>
        <label>MAD1L1</label>
    </interactant>
    <organismsDiffer>false</organismsDiffer>
    <experiments>3</experiments>
</comment>
<comment type="interaction">
    <interactant intactId="EBI-359352">
        <id>P25786</id>
    </interactant>
    <interactant intactId="EBI-959949">
        <id>P28482</id>
        <label>MAPK1</label>
    </interactant>
    <organismsDiffer>false</organismsDiffer>
    <experiments>3</experiments>
</comment>
<comment type="interaction">
    <interactant intactId="EBI-359352">
        <id>P25786</id>
    </interactant>
    <interactant intactId="EBI-1004115">
        <id>Q15691</id>
        <label>MAPRE1</label>
    </interactant>
    <organismsDiffer>false</organismsDiffer>
    <experiments>6</experiments>
</comment>
<comment type="interaction">
    <interactant intactId="EBI-359352">
        <id>P25786</id>
    </interactant>
    <interactant intactId="EBI-726739">
        <id>Q9UPY8</id>
        <label>MAPRE3</label>
    </interactant>
    <organismsDiffer>false</organismsDiffer>
    <experiments>4</experiments>
</comment>
<comment type="interaction">
    <interactant intactId="EBI-359352">
        <id>P25786</id>
    </interactant>
    <interactant intactId="EBI-10172526">
        <id>Q9UJV3-2</id>
        <label>MID2</label>
    </interactant>
    <organismsDiffer>false</organismsDiffer>
    <experiments>6</experiments>
</comment>
<comment type="interaction">
    <interactant intactId="EBI-359352">
        <id>P25786</id>
    </interactant>
    <interactant intactId="EBI-740987">
        <id>Q9NQG6</id>
        <label>MIEF1</label>
    </interactant>
    <organismsDiffer>false</organismsDiffer>
    <experiments>3</experiments>
</comment>
<comment type="interaction">
    <interactant intactId="EBI-359352">
        <id>P25786</id>
    </interactant>
    <interactant intactId="EBI-14141314">
        <id>Q9HBH9-2</id>
        <label>MKNK2</label>
    </interactant>
    <organismsDiffer>false</organismsDiffer>
    <experiments>3</experiments>
</comment>
<comment type="interaction">
    <interactant intactId="EBI-359352">
        <id>P25786</id>
    </interactant>
    <interactant intactId="EBI-2340269">
        <id>Q13064</id>
        <label>MKRN3</label>
    </interactant>
    <organismsDiffer>false</organismsDiffer>
    <experiments>6</experiments>
</comment>
<comment type="interaction">
    <interactant intactId="EBI-359352">
        <id>P25786</id>
    </interactant>
    <interactant intactId="EBI-744248">
        <id>P40692</id>
        <label>MLH1</label>
    </interactant>
    <organismsDiffer>false</organismsDiffer>
    <experiments>5</experiments>
</comment>
<comment type="interaction">
    <interactant intactId="EBI-359352">
        <id>P25786</id>
    </interactant>
    <interactant intactId="EBI-748896">
        <id>Q96HT8</id>
        <label>MRFAP1L1</label>
    </interactant>
    <organismsDiffer>false</organismsDiffer>
    <experiments>4</experiments>
</comment>
<comment type="interaction">
    <interactant intactId="EBI-359352">
        <id>P25786</id>
    </interactant>
    <interactant intactId="EBI-7850168">
        <id>Q8NCY6</id>
        <label>MSANTD4</label>
    </interactant>
    <organismsDiffer>false</organismsDiffer>
    <experiments>3</experiments>
</comment>
<comment type="interaction">
    <interactant intactId="EBI-359352">
        <id>P25786</id>
    </interactant>
    <interactant intactId="EBI-742948">
        <id>Q5JR59</id>
        <label>MTUS2</label>
    </interactant>
    <organismsDiffer>false</organismsDiffer>
    <experiments>6</experiments>
</comment>
<comment type="interaction">
    <interactant intactId="EBI-359352">
        <id>P25786</id>
    </interactant>
    <interactant intactId="EBI-11522433">
        <id>Q5JR59-3</id>
        <label>MTUS2</label>
    </interactant>
    <organismsDiffer>false</organismsDiffer>
    <experiments>3</experiments>
</comment>
<comment type="interaction">
    <interactant intactId="EBI-359352">
        <id>P25786</id>
    </interactant>
    <interactant intactId="EBI-8641936">
        <id>Q15742</id>
        <label>NAB2</label>
    </interactant>
    <organismsDiffer>false</organismsDiffer>
    <experiments>3</experiments>
</comment>
<comment type="interaction">
    <interactant intactId="EBI-359352">
        <id>P25786</id>
    </interactant>
    <interactant intactId="EBI-744782">
        <id>Q9Y5B8</id>
        <label>NME7</label>
    </interactant>
    <organismsDiffer>false</organismsDiffer>
    <experiments>3</experiments>
</comment>
<comment type="interaction">
    <interactant intactId="EBI-359352">
        <id>P25786</id>
    </interactant>
    <interactant intactId="EBI-945833">
        <id>Q7Z3S9</id>
        <label>NOTCH2NLA</label>
    </interactant>
    <organismsDiffer>false</organismsDiffer>
    <experiments>3</experiments>
</comment>
<comment type="interaction">
    <interactant intactId="EBI-359352">
        <id>P25786</id>
    </interactant>
    <interactant intactId="EBI-22310682">
        <id>P0DPK4</id>
        <label>NOTCH2NLC</label>
    </interactant>
    <organismsDiffer>false</organismsDiffer>
    <experiments>3</experiments>
</comment>
<comment type="interaction">
    <interactant intactId="EBI-359352">
        <id>P25786</id>
    </interactant>
    <interactant intactId="EBI-740475">
        <id>P61457</id>
        <label>PCBD1</label>
    </interactant>
    <organismsDiffer>false</organismsDiffer>
    <experiments>3</experiments>
</comment>
<comment type="interaction">
    <interactant intactId="EBI-359352">
        <id>P25786</id>
    </interactant>
    <interactant intactId="EBI-750317">
        <id>Q99447</id>
        <label>PCYT2</label>
    </interactant>
    <organismsDiffer>false</organismsDiffer>
    <experiments>3</experiments>
</comment>
<comment type="interaction">
    <interactant intactId="EBI-359352">
        <id>P25786</id>
    </interactant>
    <interactant intactId="EBI-79165">
        <id>Q9NRD5</id>
        <label>PICK1</label>
    </interactant>
    <organismsDiffer>false</organismsDiffer>
    <experiments>3</experiments>
</comment>
<comment type="interaction">
    <interactant intactId="EBI-359352">
        <id>P25786</id>
    </interactant>
    <interactant intactId="EBI-11339910">
        <id>Q8IYS1</id>
        <label>PM20D2</label>
    </interactant>
    <organismsDiffer>false</organismsDiffer>
    <experiments>3</experiments>
</comment>
<comment type="interaction">
    <interactant intactId="EBI-359352">
        <id>P25786</id>
    </interactant>
    <interactant intactId="EBI-302345">
        <id>Q8ND90</id>
        <label>PNMA1</label>
    </interactant>
    <organismsDiffer>false</organismsDiffer>
    <experiments>6</experiments>
</comment>
<comment type="interaction">
    <interactant intactId="EBI-359352">
        <id>P25786</id>
    </interactant>
    <interactant intactId="EBI-302355">
        <id>Q9UL42</id>
        <label>PNMA2</label>
    </interactant>
    <organismsDiffer>false</organismsDiffer>
    <experiments>4</experiments>
</comment>
<comment type="interaction">
    <interactant intactId="EBI-359352">
        <id>P25786</id>
    </interactant>
    <interactant intactId="EBI-10171633">
        <id>Q96PV4</id>
        <label>PNMA5</label>
    </interactant>
    <organismsDiffer>false</organismsDiffer>
    <experiments>3</experiments>
</comment>
<comment type="interaction">
    <interactant intactId="EBI-359352">
        <id>P25786</id>
    </interactant>
    <interactant intactId="EBI-1055079">
        <id>O15160</id>
        <label>POLR1C</label>
    </interactant>
    <organismsDiffer>false</organismsDiffer>
    <experiments>3</experiments>
</comment>
<comment type="interaction">
    <interactant intactId="EBI-359352">
        <id>P25786</id>
    </interactant>
    <interactant intactId="EBI-3957793">
        <id>Q9GZV8</id>
        <label>PRDM14</label>
    </interactant>
    <organismsDiffer>false</organismsDiffer>
    <experiments>3</experiments>
</comment>
<comment type="interaction">
    <interactant intactId="EBI-359352">
        <id>P25786</id>
    </interactant>
    <interactant intactId="EBI-10044038">
        <id>Q96LW4</id>
        <label>PRIMPOL</label>
    </interactant>
    <organismsDiffer>false</organismsDiffer>
    <experiments>3</experiments>
</comment>
<comment type="interaction">
    <interactant intactId="EBI-359352">
        <id>P25786</id>
    </interactant>
    <interactant intactId="EBI-21251460">
        <id>O60260-5</id>
        <label>PRKN</label>
    </interactant>
    <organismsDiffer>false</organismsDiffer>
    <experiments>6</experiments>
</comment>
<comment type="interaction">
    <interactant intactId="EBI-359352">
        <id>P25786</id>
    </interactant>
    <interactant intactId="EBI-752074">
        <id>P41219</id>
        <label>PRPH</label>
    </interactant>
    <organismsDiffer>false</organismsDiffer>
    <experiments>3</experiments>
</comment>
<comment type="interaction">
    <interactant intactId="EBI-359352">
        <id>P25786</id>
    </interactant>
    <interactant intactId="EBI-603262">
        <id>P25787</id>
        <label>PSMA2</label>
    </interactant>
    <organismsDiffer>false</organismsDiffer>
    <experiments>21</experiments>
</comment>
<comment type="interaction">
    <interactant intactId="EBI-359352">
        <id>P25786</id>
    </interactant>
    <interactant intactId="EBI-348380">
        <id>P25788</id>
        <label>PSMA3</label>
    </interactant>
    <organismsDiffer>false</organismsDiffer>
    <experiments>21</experiments>
</comment>
<comment type="interaction">
    <interactant intactId="EBI-359352">
        <id>P25786</id>
    </interactant>
    <interactant intactId="EBI-359310">
        <id>P25789</id>
        <label>PSMA4</label>
    </interactant>
    <organismsDiffer>false</organismsDiffer>
    <experiments>14</experiments>
</comment>
<comment type="interaction">
    <interactant intactId="EBI-359352">
        <id>P25786</id>
    </interactant>
    <interactant intactId="EBI-603272">
        <id>O14818</id>
        <label>PSMA7</label>
    </interactant>
    <organismsDiffer>false</organismsDiffer>
    <experiments>22</experiments>
</comment>
<comment type="interaction">
    <interactant intactId="EBI-359352">
        <id>P25786</id>
    </interactant>
    <interactant intactId="EBI-372273">
        <id>P20618</id>
        <label>PSMB1</label>
    </interactant>
    <organismsDiffer>false</organismsDiffer>
    <experiments>16</experiments>
</comment>
<comment type="interaction">
    <interactant intactId="EBI-359352">
        <id>P25786</id>
    </interactant>
    <interactant intactId="EBI-359335">
        <id>P49721</id>
        <label>PSMB2</label>
    </interactant>
    <organismsDiffer>false</organismsDiffer>
    <experiments>15</experiments>
</comment>
<comment type="interaction">
    <interactant intactId="EBI-359352">
        <id>P25786</id>
    </interactant>
    <interactant intactId="EBI-2371956">
        <id>Q9GZU8</id>
        <label>PSME3IP1</label>
    </interactant>
    <organismsDiffer>false</organismsDiffer>
    <experiments>3</experiments>
</comment>
<comment type="interaction">
    <interactant intactId="EBI-359352">
        <id>P25786</id>
    </interactant>
    <interactant intactId="EBI-2340624">
        <id>Q9BYM8</id>
        <label>RBCK1</label>
    </interactant>
    <organismsDiffer>false</organismsDiffer>
    <experiments>3</experiments>
</comment>
<comment type="interaction">
    <interactant intactId="EBI-359352">
        <id>P25786</id>
    </interactant>
    <interactant intactId="EBI-307352">
        <id>Q04864</id>
        <label>REL</label>
    </interactant>
    <organismsDiffer>false</organismsDiffer>
    <experiments>3</experiments>
</comment>
<comment type="interaction">
    <interactant intactId="EBI-359352">
        <id>P25786</id>
    </interactant>
    <interactant intactId="EBI-12936957">
        <id>P35250-2</id>
        <label>RFC2</label>
    </interactant>
    <organismsDiffer>false</organismsDiffer>
    <experiments>3</experiments>
</comment>
<comment type="interaction">
    <interactant intactId="EBI-359352">
        <id>P25786</id>
    </interactant>
    <interactant intactId="EBI-874907">
        <id>P49795</id>
        <label>RGS19</label>
    </interactant>
    <organismsDiffer>false</organismsDiffer>
    <experiments>3</experiments>
</comment>
<comment type="interaction">
    <interactant intactId="EBI-359352">
        <id>P25786</id>
    </interactant>
    <interactant intactId="EBI-1378139">
        <id>Q9HAT0</id>
        <label>ROPN1</label>
    </interactant>
    <organismsDiffer>false</organismsDiffer>
    <experiments>6</experiments>
</comment>
<comment type="interaction">
    <interactant intactId="EBI-359352">
        <id>P25786</id>
    </interactant>
    <interactant intactId="EBI-711613">
        <id>P21673</id>
        <label>SAT1</label>
    </interactant>
    <organismsDiffer>false</organismsDiffer>
    <experiments>3</experiments>
</comment>
<comment type="interaction">
    <interactant intactId="EBI-359352">
        <id>P25786</id>
    </interactant>
    <interactant intactId="EBI-2623095">
        <id>Q9Y371</id>
        <label>SH3GLB1</label>
    </interactant>
    <organismsDiffer>false</organismsDiffer>
    <experiments>3</experiments>
</comment>
<comment type="interaction">
    <interactant intactId="EBI-359352">
        <id>P25786</id>
    </interactant>
    <interactant intactId="EBI-2682240">
        <id>Q8IX21</id>
        <label>SLF2</label>
    </interactant>
    <organismsDiffer>false</organismsDiffer>
    <experiments>3</experiments>
</comment>
<comment type="interaction">
    <interactant intactId="EBI-359352">
        <id>P25786</id>
    </interactant>
    <interactant intactId="EBI-12811275">
        <id>O95238</id>
        <label>SPDEF</label>
    </interactant>
    <organismsDiffer>false</organismsDiffer>
    <experiments>3</experiments>
</comment>
<comment type="interaction">
    <interactant intactId="EBI-359352">
        <id>P25786</id>
    </interactant>
    <interactant intactId="EBI-2212028">
        <id>Q9Y2D8</id>
        <label>SSX2IP</label>
    </interactant>
    <organismsDiffer>false</organismsDiffer>
    <experiments>3</experiments>
</comment>
<comment type="interaction">
    <interactant intactId="EBI-359352">
        <id>P25786</id>
    </interactant>
    <interactant intactId="EBI-722877">
        <id>Q99081</id>
        <label>TCF12</label>
    </interactant>
    <organismsDiffer>false</organismsDiffer>
    <experiments>4</experiments>
</comment>
<comment type="interaction">
    <interactant intactId="EBI-359352">
        <id>P25786</id>
    </interactant>
    <interactant intactId="EBI-533224">
        <id>P15884</id>
        <label>TCF4</label>
    </interactant>
    <organismsDiffer>false</organismsDiffer>
    <experiments>3</experiments>
</comment>
<comment type="interaction">
    <interactant intactId="EBI-359352">
        <id>P25786</id>
    </interactant>
    <interactant intactId="EBI-750487">
        <id>Q8WW24</id>
        <label>TEKT4</label>
    </interactant>
    <organismsDiffer>false</organismsDiffer>
    <experiments>3</experiments>
</comment>
<comment type="interaction">
    <interactant intactId="EBI-359352">
        <id>P25786</id>
    </interactant>
    <interactant intactId="EBI-2505861">
        <id>Q13829</id>
        <label>TNFAIP1</label>
    </interactant>
    <organismsDiffer>false</organismsDiffer>
    <experiments>3</experiments>
</comment>
<comment type="interaction">
    <interactant intactId="EBI-359352">
        <id>P25786</id>
    </interactant>
    <interactant intactId="EBI-10182881">
        <id>A1L306</id>
        <label>TNR</label>
    </interactant>
    <organismsDiffer>false</organismsDiffer>
    <experiments>3</experiments>
</comment>
<comment type="interaction">
    <interactant intactId="EBI-359352">
        <id>P25786</id>
    </interactant>
    <interactant intactId="EBI-359224">
        <id>Q13077</id>
        <label>TRAF1</label>
    </interactant>
    <organismsDiffer>false</organismsDiffer>
    <experiments>3</experiments>
</comment>
<comment type="interaction">
    <interactant intactId="EBI-359352">
        <id>P25786</id>
    </interactant>
    <interactant intactId="EBI-523498">
        <id>O00463</id>
        <label>TRAF5</label>
    </interactant>
    <organismsDiffer>false</organismsDiffer>
    <experiments>3</experiments>
</comment>
<comment type="interaction">
    <interactant intactId="EBI-359352">
        <id>P25786</id>
    </interactant>
    <interactant intactId="EBI-6427325">
        <id>Q9UDY6</id>
        <label>TRIM10</label>
    </interactant>
    <organismsDiffer>false</organismsDiffer>
    <experiments>4</experiments>
</comment>
<comment type="interaction">
    <interactant intactId="EBI-359352">
        <id>P25786</id>
    </interactant>
    <interactant intactId="EBI-740098">
        <id>P36406</id>
        <label>TRIM23</label>
    </interactant>
    <organismsDiffer>false</organismsDiffer>
    <experiments>5</experiments>
</comment>
<comment type="interaction">
    <interactant intactId="EBI-359352">
        <id>P25786</id>
    </interactant>
    <interactant intactId="EBI-719493">
        <id>P14373</id>
        <label>TRIM27</label>
    </interactant>
    <organismsDiffer>false</organismsDiffer>
    <experiments>6</experiments>
</comment>
<comment type="interaction">
    <interactant intactId="EBI-359352">
        <id>P25786</id>
    </interactant>
    <interactant intactId="EBI-5235829">
        <id>Q8IWZ5</id>
        <label>TRIM42</label>
    </interactant>
    <organismsDiffer>false</organismsDiffer>
    <experiments>3</experiments>
</comment>
<comment type="interaction">
    <interactant intactId="EBI-359352">
        <id>P25786</id>
    </interactant>
    <interactant intactId="EBI-2130429">
        <id>Q9BYV2</id>
        <label>TRIM54</label>
    </interactant>
    <organismsDiffer>false</organismsDiffer>
    <experiments>3</experiments>
</comment>
<comment type="interaction">
    <interactant intactId="EBI-359352">
        <id>P25786</id>
    </interactant>
    <interactant intactId="EBI-746004">
        <id>Q5T124</id>
        <label>UBXN11</label>
    </interactant>
    <organismsDiffer>false</organismsDiffer>
    <experiments>3</experiments>
</comment>
<comment type="interaction">
    <interactant intactId="EBI-359352">
        <id>P25786</id>
    </interactant>
    <interactant intactId="EBI-11524408">
        <id>Q5T124-6</id>
        <label>UBXN11</label>
    </interactant>
    <organismsDiffer>false</organismsDiffer>
    <experiments>3</experiments>
</comment>
<comment type="interaction">
    <interactant intactId="EBI-359352">
        <id>P25786</id>
    </interactant>
    <interactant intactId="EBI-355164">
        <id>P55072</id>
        <label>VCP</label>
    </interactant>
    <organismsDiffer>false</organismsDiffer>
    <experiments>6</experiments>
</comment>
<comment type="interaction">
    <interactant intactId="EBI-359352">
        <id>P25786</id>
    </interactant>
    <interactant intactId="EBI-2803134">
        <id>Q2NL98</id>
        <label>VMAC</label>
    </interactant>
    <organismsDiffer>false</organismsDiffer>
    <experiments>3</experiments>
</comment>
<comment type="interaction">
    <interactant intactId="EBI-359352">
        <id>P25786</id>
    </interactant>
    <interactant intactId="EBI-751647">
        <id>Q15007</id>
        <label>WTAP</label>
    </interactant>
    <organismsDiffer>false</organismsDiffer>
    <experiments>3</experiments>
</comment>
<comment type="interaction">
    <interactant intactId="EBI-359352">
        <id>P25786</id>
    </interactant>
    <interactant intactId="EBI-11721624">
        <id>P62699</id>
        <label>YPEL5</label>
    </interactant>
    <organismsDiffer>false</organismsDiffer>
    <experiments>3</experiments>
</comment>
<comment type="interaction">
    <interactant intactId="EBI-359352">
        <id>P25786</id>
    </interactant>
    <interactant intactId="EBI-746595">
        <id>Q96E35</id>
        <label>ZMYND19</label>
    </interactant>
    <organismsDiffer>false</organismsDiffer>
    <experiments>3</experiments>
</comment>
<comment type="subcellular location">
    <subcellularLocation>
        <location evidence="5 19">Cytoplasm</location>
    </subcellularLocation>
    <subcellularLocation>
        <location evidence="5 19">Nucleus</location>
    </subcellularLocation>
    <text evidence="19">Translocated from the cytoplasm into the nucleus following interaction with AKIRIN2, which bridges the proteasome with the nuclear import receptor IPO9.</text>
</comment>
<comment type="alternative products">
    <event type="alternative splicing"/>
    <isoform>
        <id>P25786-1</id>
        <name>Short</name>
        <sequence type="displayed"/>
    </isoform>
    <isoform>
        <id>P25786-2</id>
        <name>Long</name>
        <sequence type="described" ref="VSP_005279"/>
    </isoform>
</comment>
<comment type="induction">
    <text evidence="8 9 10">Induced in breast cancer tissue (at protein level). Up-regulated in liver tumor tissues.</text>
</comment>
<comment type="similarity">
    <text evidence="3">Belongs to the peptidase T1A family.</text>
</comment>
<feature type="chain" id="PRO_0000124060" description="Proteasome subunit alpha type-1">
    <location>
        <begin position="1"/>
        <end position="263"/>
    </location>
</feature>
<feature type="region of interest" description="Disordered" evidence="4">
    <location>
        <begin position="232"/>
        <end position="263"/>
    </location>
</feature>
<feature type="compositionally biased region" description="Basic and acidic residues" evidence="4">
    <location>
        <begin position="253"/>
        <end position="263"/>
    </location>
</feature>
<feature type="modified residue" description="N-acetylmethionine" evidence="2">
    <location>
        <position position="1"/>
    </location>
</feature>
<feature type="modified residue" description="Phosphoserine; alternate" evidence="26">
    <location>
        <position position="110"/>
    </location>
</feature>
<feature type="modified residue" description="Phosphoserine" evidence="26">
    <location>
        <position position="177"/>
    </location>
</feature>
<feature type="glycosylation site" description="O-linked (GlcNAc) serine; alternate" evidence="1">
    <location>
        <position position="110"/>
    </location>
</feature>
<feature type="cross-link" description="Glycyl lysine isopeptide (Lys-Gly) (interchain with G-Cter in ubiquitin)">
    <location>
        <position position="115"/>
    </location>
</feature>
<feature type="cross-link" description="Glycyl lysine isopeptide (Lys-Gly) (interchain with G-Cter in ubiquitin)">
    <location>
        <position position="208"/>
    </location>
</feature>
<feature type="splice variant" id="VSP_005279" description="In isoform Long." evidence="22">
    <original>M</original>
    <variation>MQLSKVK</variation>
    <location>
        <position position="1"/>
    </location>
</feature>
<feature type="sequence variant" id="VAR_067454" description="In dbSNP:rs17850016." evidence="7 21">
    <original>G</original>
    <variation>V</variation>
    <location>
        <position position="37"/>
    </location>
</feature>
<feature type="sequence conflict" description="In Ref. 3; AAA92734." evidence="24" ref="3">
    <original>SP</original>
    <variation>TA</variation>
    <location>
        <begin position="14"/>
        <end position="15"/>
    </location>
</feature>
<feature type="turn" evidence="33">
    <location>
        <begin position="2"/>
        <end position="5"/>
    </location>
</feature>
<feature type="strand" evidence="30">
    <location>
        <begin position="6"/>
        <end position="8"/>
    </location>
</feature>
<feature type="strand" evidence="27">
    <location>
        <begin position="9"/>
        <end position="11"/>
    </location>
</feature>
<feature type="strand" evidence="34">
    <location>
        <begin position="15"/>
        <end position="17"/>
    </location>
</feature>
<feature type="helix" evidence="28">
    <location>
        <begin position="20"/>
        <end position="31"/>
    </location>
</feature>
<feature type="strand" evidence="28">
    <location>
        <begin position="35"/>
        <end position="39"/>
    </location>
</feature>
<feature type="strand" evidence="28">
    <location>
        <begin position="41"/>
        <end position="49"/>
    </location>
</feature>
<feature type="strand" evidence="29">
    <location>
        <begin position="53"/>
        <end position="57"/>
    </location>
</feature>
<feature type="strand" evidence="28">
    <location>
        <begin position="63"/>
        <end position="67"/>
    </location>
</feature>
<feature type="strand" evidence="28">
    <location>
        <begin position="70"/>
        <end position="76"/>
    </location>
</feature>
<feature type="helix" evidence="28">
    <location>
        <begin position="78"/>
        <end position="99"/>
    </location>
</feature>
<feature type="helix" evidence="28">
    <location>
        <begin position="105"/>
        <end position="117"/>
    </location>
</feature>
<feature type="helix" evidence="28">
    <location>
        <begin position="118"/>
        <end position="121"/>
    </location>
</feature>
<feature type="strand" evidence="32">
    <location>
        <begin position="122"/>
        <end position="125"/>
    </location>
</feature>
<feature type="strand" evidence="28">
    <location>
        <begin position="130"/>
        <end position="138"/>
    </location>
</feature>
<feature type="strand" evidence="28">
    <location>
        <begin position="141"/>
        <end position="147"/>
    </location>
</feature>
<feature type="strand" evidence="31">
    <location>
        <begin position="149"/>
        <end position="151"/>
    </location>
</feature>
<feature type="strand" evidence="28">
    <location>
        <begin position="154"/>
        <end position="162"/>
    </location>
</feature>
<feature type="helix" evidence="28">
    <location>
        <begin position="165"/>
        <end position="175"/>
    </location>
</feature>
<feature type="helix" evidence="28">
    <location>
        <begin position="176"/>
        <end position="181"/>
    </location>
</feature>
<feature type="helix" evidence="28">
    <location>
        <begin position="184"/>
        <end position="196"/>
    </location>
</feature>
<feature type="turn" evidence="28">
    <location>
        <begin position="207"/>
        <end position="209"/>
    </location>
</feature>
<feature type="strand" evidence="28">
    <location>
        <begin position="210"/>
        <end position="216"/>
    </location>
</feature>
<feature type="strand" evidence="28">
    <location>
        <begin position="219"/>
        <end position="224"/>
    </location>
</feature>
<feature type="helix" evidence="28">
    <location>
        <begin position="226"/>
        <end position="229"/>
    </location>
</feature>
<feature type="helix" evidence="28">
    <location>
        <begin position="230"/>
        <end position="233"/>
    </location>
</feature>
<sequence length="263" mass="29556">MFRNQYDNDVTVWSPQGRIHQIEYAMEAVKQGSATVGLKSKTHAVLVALKRAQSELAAHQKKILHVDNHIGISIAGLTADARLLCNFMRQECLDSRFVFDRPLPVSRLVSLIGSKTQIPTQRYGRRPYGVGLLIAGYDDMGPHIFQTCPSANYFDCRAMSIGARSQSARTYLERHMSEFMECNLNELVKHGLRALRETLPAEQDLTTKNVSIGIVGKDLEFTIYDDDDVSPFLEGLEERPQRKAQPAQPADEPAEKADEPMEH</sequence>
<name>PSA1_HUMAN</name>
<organism>
    <name type="scientific">Homo sapiens</name>
    <name type="common">Human</name>
    <dbReference type="NCBI Taxonomy" id="9606"/>
    <lineage>
        <taxon>Eukaryota</taxon>
        <taxon>Metazoa</taxon>
        <taxon>Chordata</taxon>
        <taxon>Craniata</taxon>
        <taxon>Vertebrata</taxon>
        <taxon>Euteleostomi</taxon>
        <taxon>Mammalia</taxon>
        <taxon>Eutheria</taxon>
        <taxon>Euarchontoglires</taxon>
        <taxon>Primates</taxon>
        <taxon>Haplorrhini</taxon>
        <taxon>Catarrhini</taxon>
        <taxon>Hominidae</taxon>
        <taxon>Homo</taxon>
    </lineage>
</organism>
<accession>P25786</accession>
<accession>A8K400</accession>
<accession>Q53YE8</accession>
<accession>Q9BRV9</accession>
<evidence type="ECO:0000250" key="1"/>
<evidence type="ECO:0000250" key="2">
    <source>
        <dbReference type="UniProtKB" id="P18420"/>
    </source>
</evidence>
<evidence type="ECO:0000255" key="3">
    <source>
        <dbReference type="PROSITE-ProRule" id="PRU00808"/>
    </source>
</evidence>
<evidence type="ECO:0000256" key="4">
    <source>
        <dbReference type="SAM" id="MobiDB-lite"/>
    </source>
</evidence>
<evidence type="ECO:0000269" key="5">
    <source>
    </source>
</evidence>
<evidence type="ECO:0000269" key="6">
    <source>
    </source>
</evidence>
<evidence type="ECO:0000269" key="7">
    <source>
    </source>
</evidence>
<evidence type="ECO:0000269" key="8">
    <source>
    </source>
</evidence>
<evidence type="ECO:0000269" key="9">
    <source>
    </source>
</evidence>
<evidence type="ECO:0000269" key="10">
    <source>
    </source>
</evidence>
<evidence type="ECO:0000269" key="11">
    <source>
    </source>
</evidence>
<evidence type="ECO:0000269" key="12">
    <source>
    </source>
</evidence>
<evidence type="ECO:0000269" key="13">
    <source>
    </source>
</evidence>
<evidence type="ECO:0000269" key="14">
    <source>
    </source>
</evidence>
<evidence type="ECO:0000269" key="15">
    <source>
    </source>
</evidence>
<evidence type="ECO:0000269" key="16">
    <source>
    </source>
</evidence>
<evidence type="ECO:0000269" key="17">
    <source>
    </source>
</evidence>
<evidence type="ECO:0000269" key="18">
    <source>
    </source>
</evidence>
<evidence type="ECO:0000269" key="19">
    <source>
    </source>
</evidence>
<evidence type="ECO:0000269" key="20">
    <source>
    </source>
</evidence>
<evidence type="ECO:0000269" key="21">
    <source ref="4"/>
</evidence>
<evidence type="ECO:0000303" key="22">
    <source>
    </source>
</evidence>
<evidence type="ECO:0000303" key="23">
    <source>
    </source>
</evidence>
<evidence type="ECO:0000305" key="24"/>
<evidence type="ECO:0000312" key="25">
    <source>
        <dbReference type="HGNC" id="HGNC:9530"/>
    </source>
</evidence>
<evidence type="ECO:0007744" key="26">
    <source>
    </source>
</evidence>
<evidence type="ECO:0007829" key="27">
    <source>
        <dbReference type="PDB" id="5A0Q"/>
    </source>
</evidence>
<evidence type="ECO:0007829" key="28">
    <source>
        <dbReference type="PDB" id="5LE5"/>
    </source>
</evidence>
<evidence type="ECO:0007829" key="29">
    <source>
        <dbReference type="PDB" id="5LF3"/>
    </source>
</evidence>
<evidence type="ECO:0007829" key="30">
    <source>
        <dbReference type="PDB" id="7AWE"/>
    </source>
</evidence>
<evidence type="ECO:0007829" key="31">
    <source>
        <dbReference type="PDB" id="7B12"/>
    </source>
</evidence>
<evidence type="ECO:0007829" key="32">
    <source>
        <dbReference type="PDB" id="7NAO"/>
    </source>
</evidence>
<evidence type="ECO:0007829" key="33">
    <source>
        <dbReference type="PDB" id="8QYL"/>
    </source>
</evidence>
<evidence type="ECO:0007829" key="34">
    <source>
        <dbReference type="PDB" id="8TM4"/>
    </source>
</evidence>
<protein>
    <recommendedName>
        <fullName evidence="24">Proteasome subunit alpha type-1</fullName>
    </recommendedName>
    <alternativeName>
        <fullName>30 kDa prosomal protein</fullName>
        <shortName>PROS-30</shortName>
    </alternativeName>
    <alternativeName>
        <fullName>Macropain subunit C2</fullName>
    </alternativeName>
    <alternativeName>
        <fullName>Multicatalytic endopeptidase complex subunit C2</fullName>
    </alternativeName>
    <alternativeName>
        <fullName>Proteasome component C2</fullName>
    </alternativeName>
    <alternativeName>
        <fullName>Proteasome nu chain</fullName>
    </alternativeName>
    <alternativeName>
        <fullName evidence="23">Proteasome subunit alpha-6</fullName>
        <shortName evidence="23">alpha-6</shortName>
    </alternativeName>
</protein>